<name>CP1A1_HUMAN</name>
<sequence>MLFPISMSATEFLLASVIFCLVFWVIRASRPQVPKGLKNPPGPWGWPLIGHMLTLGKNPHLALSRMSQQYGDVLQIRIGSTPVVVLSGLDTIRQALVRQGDDFKGRPDLYTFTLISNGQSMSFSPDSGPVWAARRRLAQNGLKSFSIASDPASSTSCYLEEHVSKEAEVLISTLQELMAGPGHFNPYRYVVVSVTNVICAICFGRRYDHNHQELLSLVNLNNNFGEVVGSGNPADFIPILRYLPNPSLNAFKDLNEKFYSFMQKMVKEHYKTFEKGHIRDITDSLIEHCQEKQLDENANVQLSDEKIINIVLDLFGAGFDTVTTAISWSLMYLVMNPRVQRKIQEELDTVIGRSRRPRLSDRSHLPYMEAFILETFRHSSFVPFTIPHSTTRDTSLKGFYIPKGRCVFVNQWQINHDQKLWVNPSEFLPERFLTPDGAIDKVLSEKVIIFGMGKRKCIGETIARWEVFLFLAILLQRVEFSVPLGVKVDMTPIYGLTMKHACCEHFQMQLRS</sequence>
<gene>
    <name evidence="23 37" type="primary">CYP1A1</name>
</gene>
<feature type="chain" id="PRO_0000051627" description="Cytochrome P450 1A1">
    <location>
        <begin position="1"/>
        <end position="512"/>
    </location>
</feature>
<feature type="region of interest" description="Mitochondrial targeting signal" evidence="2">
    <location>
        <begin position="29"/>
        <end position="40"/>
    </location>
</feature>
<feature type="binding site" evidence="20">
    <location>
        <position position="224"/>
    </location>
    <ligand>
        <name>substrate</name>
    </ligand>
</feature>
<feature type="binding site" description="axial binding residue" evidence="20">
    <location>
        <position position="457"/>
    </location>
    <ligand>
        <name>heme</name>
        <dbReference type="ChEBI" id="CHEBI:30413"/>
    </ligand>
    <ligandPart>
        <name>Fe</name>
        <dbReference type="ChEBI" id="CHEBI:18248"/>
    </ligandPart>
</feature>
<feature type="glycosylation site" description="O-linked (GlcNAc) serine" evidence="1">
    <location>
        <position position="67"/>
    </location>
</feature>
<feature type="splice variant" id="VSP_053363" description="In isoform 3." evidence="25">
    <location>
        <begin position="1"/>
        <end position="261"/>
    </location>
</feature>
<feature type="splice variant" id="VSP_053364" description="In isoform 2." evidence="25">
    <original>Y</original>
    <variation>T</variation>
    <location>
        <position position="189"/>
    </location>
</feature>
<feature type="splice variant" id="VSP_053365" description="In isoform 2." evidence="25">
    <location>
        <begin position="190"/>
        <end position="512"/>
    </location>
</feature>
<feature type="splice variant" id="VSP_053366" description="In isoform 3." evidence="25">
    <location>
        <begin position="419"/>
        <end position="512"/>
    </location>
</feature>
<feature type="sequence variant" id="VAR_023194" description="In dbSNP:rs4646422." evidence="10 12 22">
    <original>G</original>
    <variation>D</variation>
    <location>
        <position position="45"/>
    </location>
</feature>
<feature type="sequence variant" id="VAR_033817" description="In dbSNP:rs35035798.">
    <original>M</original>
    <variation>V</variation>
    <location>
        <position position="66"/>
    </location>
</feature>
<feature type="sequence variant" id="VAR_023195" description="In dbSNP:rs17861094." evidence="10 12">
    <original>I</original>
    <variation>T</variation>
    <location>
        <position position="78"/>
    </location>
</feature>
<feature type="sequence variant" id="VAR_024706" description="In dbSNP:rs2229150." evidence="10">
    <original>R</original>
    <variation>W</variation>
    <location>
        <position position="93"/>
    </location>
</feature>
<feature type="sequence variant" id="VAR_024707" description="In dbSNP:rs28399427." evidence="10">
    <original>T</original>
    <variation>R</variation>
    <location>
        <position position="173"/>
    </location>
</feature>
<feature type="sequence variant" id="VAR_009280" description="In dbSNP:rs34260157." evidence="4">
    <original>R</original>
    <variation>W</variation>
    <location>
        <position position="279"/>
    </location>
</feature>
<feature type="sequence variant" id="VAR_020122" description="In dbSNP:rs4987133.">
    <original>I</original>
    <variation>T</variation>
    <location>
        <position position="286"/>
    </location>
</feature>
<feature type="sequence variant" id="VAR_016937" description="In allele CYP1A1*6; dbSNP:rs56313657." evidence="5">
    <original>M</original>
    <variation>I</variation>
    <location>
        <position position="331"/>
    </location>
</feature>
<feature type="sequence variant" id="VAR_016938" description="In allele CYP1A1*8; dbSNP:rs72547509." evidence="11">
    <original>I</original>
    <variation>N</variation>
    <location>
        <position position="448"/>
    </location>
</feature>
<feature type="sequence variant" id="VAR_008342" description="In allele CYP1A1*4; displays similar catalytic efficiency toward estrogens when compared to the wild-type enzyme.; dbSNP:rs1799814." evidence="10 12 13 21">
    <original>T</original>
    <variation>N</variation>
    <location>
        <position position="461"/>
    </location>
</feature>
<feature type="sequence variant" id="VAR_001243" description="In allele CYP1A1*2B and allele CYP1A1*2C; displays 5.7- and 12-fold increase in catalytic efficiency in the formation of 2-hydroxylated estrogens, 17beta-estradiol and estrone respectively.; dbSNP:rs1048943." evidence="12 13 15">
    <original>I</original>
    <variation>V</variation>
    <location>
        <position position="462"/>
    </location>
</feature>
<feature type="sequence variant" id="VAR_016939" description="In allele CYP1A1*9; dbSNP:rs41279188." evidence="11">
    <original>R</original>
    <variation>C</variation>
    <location>
        <position position="464"/>
    </location>
</feature>
<feature type="sequence variant" id="VAR_016940" description="In allele CYP1A1*5; dbSNP:rs41279188." evidence="5">
    <original>R</original>
    <variation>S</variation>
    <location>
        <position position="464"/>
    </location>
</feature>
<feature type="sequence variant" id="VAR_033818" description="In dbSNP:rs36121583.">
    <original>F</original>
    <variation>V</variation>
    <location>
        <position position="470"/>
    </location>
</feature>
<feature type="sequence variant" id="VAR_016941" description="In allele CYP1A1*10; dbSNP:rs56240201." evidence="11 14">
    <original>R</original>
    <variation>W</variation>
    <location>
        <position position="477"/>
    </location>
</feature>
<feature type="sequence variant" id="VAR_024708" description="In dbSNP:rs28399429." evidence="10">
    <original>V</original>
    <variation>M</variation>
    <location>
        <position position="482"/>
    </location>
</feature>
<feature type="sequence variant" id="VAR_016942" description="In allele CYP1A1*11; dbSNP:rs28399430." evidence="10 11">
    <original>P</original>
    <variation>R</variation>
    <location>
        <position position="492"/>
    </location>
</feature>
<feature type="sequence conflict" description="In Ref. 2; AAA52139." evidence="26" ref="2">
    <original>I</original>
    <variation>M</variation>
    <location>
        <position position="26"/>
    </location>
</feature>
<feature type="sequence conflict" description="In Ref. 2; AAA52139." evidence="26" ref="2">
    <original>D</original>
    <variation>E</variation>
    <location>
        <position position="235"/>
    </location>
</feature>
<feature type="sequence conflict" description="In Ref. 1; CAA26458." evidence="26" ref="1">
    <original>F</original>
    <variation>L</variation>
    <location>
        <position position="381"/>
    </location>
</feature>
<feature type="turn" evidence="38">
    <location>
        <begin position="47"/>
        <end position="49"/>
    </location>
</feature>
<feature type="helix" evidence="38">
    <location>
        <begin position="52"/>
        <end position="55"/>
    </location>
</feature>
<feature type="helix" evidence="38">
    <location>
        <begin position="59"/>
        <end position="70"/>
    </location>
</feature>
<feature type="strand" evidence="38">
    <location>
        <begin position="72"/>
        <end position="78"/>
    </location>
</feature>
<feature type="strand" evidence="38">
    <location>
        <begin position="81"/>
        <end position="86"/>
    </location>
</feature>
<feature type="helix" evidence="38">
    <location>
        <begin position="89"/>
        <end position="96"/>
    </location>
</feature>
<feature type="turn" evidence="38">
    <location>
        <begin position="97"/>
        <end position="99"/>
    </location>
</feature>
<feature type="helix" evidence="38">
    <location>
        <begin position="100"/>
        <end position="103"/>
    </location>
</feature>
<feature type="helix" evidence="38">
    <location>
        <begin position="110"/>
        <end position="114"/>
    </location>
</feature>
<feature type="helix" evidence="38">
    <location>
        <begin position="116"/>
        <end position="118"/>
    </location>
</feature>
<feature type="turn" evidence="38">
    <location>
        <begin position="121"/>
        <end position="123"/>
    </location>
</feature>
<feature type="helix" evidence="38">
    <location>
        <begin position="129"/>
        <end position="145"/>
    </location>
</feature>
<feature type="strand" evidence="39">
    <location>
        <begin position="154"/>
        <end position="157"/>
    </location>
</feature>
<feature type="helix" evidence="38">
    <location>
        <begin position="158"/>
        <end position="179"/>
    </location>
</feature>
<feature type="helix" evidence="38">
    <location>
        <begin position="186"/>
        <end position="203"/>
    </location>
</feature>
<feature type="helix" evidence="38">
    <location>
        <begin position="212"/>
        <end position="218"/>
    </location>
</feature>
<feature type="strand" evidence="38">
    <location>
        <begin position="219"/>
        <end position="221"/>
    </location>
</feature>
<feature type="helix" evidence="38">
    <location>
        <begin position="224"/>
        <end position="228"/>
    </location>
</feature>
<feature type="helix" evidence="38">
    <location>
        <begin position="233"/>
        <end position="235"/>
    </location>
</feature>
<feature type="helix" evidence="38">
    <location>
        <begin position="238"/>
        <end position="242"/>
    </location>
</feature>
<feature type="helix" evidence="38">
    <location>
        <begin position="246"/>
        <end position="271"/>
    </location>
</feature>
<feature type="helix" evidence="38">
    <location>
        <begin position="281"/>
        <end position="292"/>
    </location>
</feature>
<feature type="strand" evidence="38">
    <location>
        <begin position="296"/>
        <end position="298"/>
    </location>
</feature>
<feature type="strand" evidence="38">
    <location>
        <begin position="300"/>
        <end position="302"/>
    </location>
</feature>
<feature type="helix" evidence="38">
    <location>
        <begin position="304"/>
        <end position="308"/>
    </location>
</feature>
<feature type="helix" evidence="38">
    <location>
        <begin position="310"/>
        <end position="334"/>
    </location>
</feature>
<feature type="helix" evidence="38">
    <location>
        <begin position="337"/>
        <end position="350"/>
    </location>
</feature>
<feature type="turn" evidence="40">
    <location>
        <begin position="351"/>
        <end position="353"/>
    </location>
</feature>
<feature type="helix" evidence="38">
    <location>
        <begin position="359"/>
        <end position="364"/>
    </location>
</feature>
<feature type="helix" evidence="38">
    <location>
        <begin position="366"/>
        <end position="379"/>
    </location>
</feature>
<feature type="strand" evidence="38">
    <location>
        <begin position="394"/>
        <end position="396"/>
    </location>
</feature>
<feature type="strand" evidence="38">
    <location>
        <begin position="399"/>
        <end position="401"/>
    </location>
</feature>
<feature type="strand" evidence="38">
    <location>
        <begin position="406"/>
        <end position="410"/>
    </location>
</feature>
<feature type="helix" evidence="38">
    <location>
        <begin position="411"/>
        <end position="415"/>
    </location>
</feature>
<feature type="turn" evidence="38">
    <location>
        <begin position="418"/>
        <end position="420"/>
    </location>
</feature>
<feature type="strand" evidence="40">
    <location>
        <begin position="421"/>
        <end position="423"/>
    </location>
</feature>
<feature type="helix" evidence="38">
    <location>
        <begin position="429"/>
        <end position="432"/>
    </location>
</feature>
<feature type="strand" evidence="38">
    <location>
        <begin position="435"/>
        <end position="437"/>
    </location>
</feature>
<feature type="helix" evidence="38">
    <location>
        <begin position="441"/>
        <end position="444"/>
    </location>
</feature>
<feature type="helix" evidence="38">
    <location>
        <begin position="453"/>
        <end position="455"/>
    </location>
</feature>
<feature type="helix" evidence="38">
    <location>
        <begin position="460"/>
        <end position="477"/>
    </location>
</feature>
<feature type="strand" evidence="38">
    <location>
        <begin position="478"/>
        <end position="481"/>
    </location>
</feature>
<feature type="strand" evidence="38">
    <location>
        <begin position="495"/>
        <end position="497"/>
    </location>
</feature>
<feature type="strand" evidence="38">
    <location>
        <begin position="506"/>
        <end position="510"/>
    </location>
</feature>
<protein>
    <recommendedName>
        <fullName evidence="24">Cytochrome P450 1A1</fullName>
        <shortName evidence="23">CYPIA1</shortName>
        <ecNumber evidence="7 9 13 16">1.14.14.1</ecNumber>
    </recommendedName>
    <alternativeName>
        <fullName>Cytochrome P450 form 6</fullName>
    </alternativeName>
    <alternativeName>
        <fullName>Cytochrome P450-C</fullName>
    </alternativeName>
    <alternativeName>
        <fullName>Cytochrome P450-P1</fullName>
    </alternativeName>
    <alternativeName>
        <fullName evidence="36">Hydroperoxy icosatetraenoate dehydratase</fullName>
        <ecNumber evidence="19">4.2.1.152</ecNumber>
    </alternativeName>
</protein>
<accession>P04798</accession>
<accession>A4F3V9</accession>
<accession>A4F3W0</accession>
<accession>Q53G18</accession>
<reference key="1">
    <citation type="journal article" date="1985" name="Nucleic Acids Res.">
        <title>Human P1-450 gene sequence and correlation of mRNA with genetic differences in benzo[a]pyrene metabolism.</title>
        <authorList>
            <person name="Jaiswal A.K."/>
            <person name="Gonzales F.J."/>
            <person name="Nebert D.W."/>
        </authorList>
    </citation>
    <scope>NUCLEOTIDE SEQUENCE [GENOMIC DNA]</scope>
</reference>
<reference key="2">
    <citation type="journal article" date="1985" name="Science">
        <title>Human dioxin-inducible cytochrome P1-450: complementary DNA and amino acid sequence.</title>
        <authorList>
            <person name="Jaiswal A.K."/>
            <person name="Gonzalez F.J."/>
            <person name="Nebert D.W."/>
        </authorList>
    </citation>
    <scope>NUCLEOTIDE SEQUENCE [MRNA] (ISOFORM 1)</scope>
</reference>
<reference key="3">
    <citation type="journal article" date="1986" name="Eur. J. Biochem.">
        <title>Structure and drug inducibility of the human cytochrome P-450c gene.</title>
        <authorList>
            <person name="Kawajiri K."/>
            <person name="Watanabe J."/>
            <person name="Gotoh O."/>
            <person name="Tagashira Y."/>
            <person name="Sogawa K."/>
            <person name="Fujii-Kuriyama Y."/>
        </authorList>
    </citation>
    <scope>NUCLEOTIDE SEQUENCE [GENOMIC DNA]</scope>
    <source>
        <tissue>Placenta</tissue>
    </source>
</reference>
<reference key="4">
    <citation type="journal article" date="2001" name="Pharmacogenetics">
        <title>Organization of the CYP1A cluster on human chromosome 15: implications for gene regulation.</title>
        <authorList>
            <person name="Corchero J."/>
            <person name="Pimprale S."/>
            <person name="Kimura S."/>
            <person name="Gonzalez F.J."/>
        </authorList>
    </citation>
    <scope>NUCLEOTIDE SEQUENCE [GENOMIC DNA]</scope>
</reference>
<reference key="5">
    <citation type="submission" date="2006-02" db="EMBL/GenBank/DDBJ databases">
        <title>Cloning and sequencing of new alternative splicing variants of human CYP1A1 gene.</title>
        <authorList>
            <person name="Graebsch C."/>
            <person name="Bauer M."/>
        </authorList>
    </citation>
    <scope>NUCLEOTIDE SEQUENCE [MRNA] (ISOFORMS 2 AND 3)</scope>
    <source>
        <tissue>Blood</tissue>
    </source>
</reference>
<reference key="6">
    <citation type="submission" date="2005-04" db="EMBL/GenBank/DDBJ databases">
        <authorList>
            <person name="Suzuki Y."/>
            <person name="Sugano S."/>
            <person name="Totoki Y."/>
            <person name="Toyoda A."/>
            <person name="Takeda T."/>
            <person name="Sakaki Y."/>
            <person name="Tanaka A."/>
            <person name="Yokoyama S."/>
        </authorList>
    </citation>
    <scope>NUCLEOTIDE SEQUENCE [LARGE SCALE MRNA] (ISOFORM 1)</scope>
    <scope>VARIANT ASP-45</scope>
</reference>
<reference key="7">
    <citation type="journal article" date="2006" name="Nature">
        <title>Analysis of the DNA sequence and duplication history of human chromosome 15.</title>
        <authorList>
            <person name="Zody M.C."/>
            <person name="Garber M."/>
            <person name="Sharpe T."/>
            <person name="Young S.K."/>
            <person name="Rowen L."/>
            <person name="O'Neill K."/>
            <person name="Whittaker C.A."/>
            <person name="Kamal M."/>
            <person name="Chang J.L."/>
            <person name="Cuomo C.A."/>
            <person name="Dewar K."/>
            <person name="FitzGerald M.G."/>
            <person name="Kodira C.D."/>
            <person name="Madan A."/>
            <person name="Qin S."/>
            <person name="Yang X."/>
            <person name="Abbasi N."/>
            <person name="Abouelleil A."/>
            <person name="Arachchi H.M."/>
            <person name="Baradarani L."/>
            <person name="Birditt B."/>
            <person name="Bloom S."/>
            <person name="Bloom T."/>
            <person name="Borowsky M.L."/>
            <person name="Burke J."/>
            <person name="Butler J."/>
            <person name="Cook A."/>
            <person name="DeArellano K."/>
            <person name="DeCaprio D."/>
            <person name="Dorris L. III"/>
            <person name="Dors M."/>
            <person name="Eichler E.E."/>
            <person name="Engels R."/>
            <person name="Fahey J."/>
            <person name="Fleetwood P."/>
            <person name="Friedman C."/>
            <person name="Gearin G."/>
            <person name="Hall J.L."/>
            <person name="Hensley G."/>
            <person name="Johnson E."/>
            <person name="Jones C."/>
            <person name="Kamat A."/>
            <person name="Kaur A."/>
            <person name="Locke D.P."/>
            <person name="Madan A."/>
            <person name="Munson G."/>
            <person name="Jaffe D.B."/>
            <person name="Lui A."/>
            <person name="Macdonald P."/>
            <person name="Mauceli E."/>
            <person name="Naylor J.W."/>
            <person name="Nesbitt R."/>
            <person name="Nicol R."/>
            <person name="O'Leary S.B."/>
            <person name="Ratcliffe A."/>
            <person name="Rounsley S."/>
            <person name="She X."/>
            <person name="Sneddon K.M.B."/>
            <person name="Stewart S."/>
            <person name="Sougnez C."/>
            <person name="Stone S.M."/>
            <person name="Topham K."/>
            <person name="Vincent D."/>
            <person name="Wang S."/>
            <person name="Zimmer A.R."/>
            <person name="Birren B.W."/>
            <person name="Hood L."/>
            <person name="Lander E.S."/>
            <person name="Nusbaum C."/>
        </authorList>
    </citation>
    <scope>NUCLEOTIDE SEQUENCE [LARGE SCALE GENOMIC DNA]</scope>
</reference>
<reference key="8">
    <citation type="journal article" date="2004" name="Genome Res.">
        <title>The status, quality, and expansion of the NIH full-length cDNA project: the Mammalian Gene Collection (MGC).</title>
        <authorList>
            <consortium name="The MGC Project Team"/>
        </authorList>
    </citation>
    <scope>NUCLEOTIDE SEQUENCE [LARGE SCALE MRNA] (ISOFORM 1)</scope>
    <source>
        <tissue>Cervix</tissue>
    </source>
</reference>
<reference key="9">
    <citation type="journal article" date="1998" name="Biochem. Biophys. Res. Commun.">
        <title>Identification of cytochrome P450 1A1 in human brain.</title>
        <authorList>
            <person name="Yun C.H."/>
            <person name="Park H.J."/>
            <person name="Kim S.J."/>
            <person name="Kim H.K."/>
        </authorList>
    </citation>
    <scope>NUCLEOTIDE SEQUENCE [MRNA] OF 282-425 (ISOFORM 1)</scope>
    <source>
        <tissue>Brain</tissue>
    </source>
</reference>
<reference key="10">
    <citation type="journal article" date="1985" name="DNA">
        <title>Cloning and isolation of human cytochrome P-450 cDNAs homologous to dioxin-inducible rabbit mRNAs encoding P-450 4 and P-450 6.</title>
        <authorList>
            <person name="Quattrochi L.C."/>
            <person name="Okino S.T."/>
            <person name="Pendurthi U.R."/>
            <person name="Tukey R.H."/>
        </authorList>
    </citation>
    <scope>NUCLEOTIDE SEQUENCE [MRNA] OF 295-484 (ISOFORM 1)</scope>
</reference>
<reference key="11">
    <citation type="journal article" date="2000" name="Drug Metab. Dispos.">
        <title>Biosynthesis of all-trans-retinoic acid from all-trans-retinol: catalysis of all-trans-retinol oxidation by human P-450 cytochromes.</title>
        <authorList>
            <person name="Chen H."/>
            <person name="Howald W.N."/>
            <person name="Juchau M.R."/>
        </authorList>
    </citation>
    <scope>FUNCTION</scope>
    <scope>CATALYTIC ACTIVITY</scope>
    <scope>PATHWAY</scope>
    <scope>BIOPHYSICOCHEMICAL PROPERTIES</scope>
</reference>
<reference key="12">
    <citation type="journal article" date="2001" name="Metabolism">
        <title>Role of human cytochrome P450 1A1, 1A2, 1B1, and 3A4 in the 2-, 4-, and 16alpha-hydroxylation of 17beta-estradiol.</title>
        <authorList>
            <person name="Badawi A.F."/>
            <person name="Cavalieri E.L."/>
            <person name="Rogan E.G."/>
        </authorList>
    </citation>
    <scope>FUNCTION</scope>
    <scope>CATALYTIC ACTIVITY</scope>
    <scope>PATHWAY</scope>
</reference>
<reference key="13">
    <citation type="journal article" date="2003" name="Cancer Res.">
        <title>Human cytochrome P450 3A7 has a distinct high catalytic activity for the 16alpha-hydroxylation of estrone but not 17beta-estradiol.</title>
        <authorList>
            <person name="Lee A.J."/>
            <person name="Conney A.H."/>
            <person name="Zhu B.T."/>
        </authorList>
    </citation>
    <scope>FUNCTION</scope>
    <scope>CATALYTIC ACTIVITY</scope>
    <scope>PATHWAY</scope>
</reference>
<reference key="14">
    <citation type="journal article" date="2003" name="Endocrinology">
        <title>Characterization of the oxidative metabolites of 17beta-estradiol and estrone formed by 15 selectively expressed human cytochrome p450 isoforms.</title>
        <authorList>
            <person name="Lee A.J."/>
            <person name="Cai M.X."/>
            <person name="Thomas P.E."/>
            <person name="Conney A.H."/>
            <person name="Zhu B.T."/>
        </authorList>
    </citation>
    <scope>FUNCTION</scope>
    <scope>CATALYTIC ACTIVITY</scope>
    <scope>PATHWAY</scope>
</reference>
<reference key="15">
    <citation type="journal article" date="2004" name="Biochem. Pharmacol.">
        <title>Arachidonic and eicosapentaenoic acid metabolism by human CYP1A1: highly stereoselective formation of 17(R),18(S)-epoxyeicosatetraenoic acid.</title>
        <authorList>
            <person name="Schwarz D."/>
            <person name="Kisselev P."/>
            <person name="Ericksen S.S."/>
            <person name="Szklarz G.D."/>
            <person name="Chernogolov A."/>
            <person name="Honeck H."/>
            <person name="Schunck W.H."/>
            <person name="Roots I."/>
        </authorList>
    </citation>
    <scope>FUNCTION</scope>
    <scope>CATALYTIC ACTIVITY</scope>
    <scope>PATHWAY</scope>
</reference>
<reference key="16">
    <citation type="journal article" date="2005" name="Cancer Res.">
        <title>Association of CYP1A1 polymorphisms with differential metabolic activation of 17beta-estradiol and estrone.</title>
        <authorList>
            <person name="Kisselev P."/>
            <person name="Schunck W.H."/>
            <person name="Roots I."/>
            <person name="Schwarz D."/>
        </authorList>
    </citation>
    <scope>FUNCTION</scope>
    <scope>CATALYTIC ACTIVITY</scope>
    <scope>CHARACTERIZATION OF VARIANT ASN-461 AND VARIANT VAL-462</scope>
    <scope>BIOPHYSICOCHEMICAL PROPERTIES</scope>
    <scope>PATHWAY</scope>
</reference>
<reference key="17">
    <citation type="journal article" date="2008" name="J. Lipid Res.">
        <title>Cytochromes P450 from family 4 are the main omega hydroxylating enzymes in humans: CYP4F3B is the prominent player in PUFA metabolism.</title>
        <authorList>
            <person name="Fer M."/>
            <person name="Corcos L."/>
            <person name="Dreano Y."/>
            <person name="Plee-Gautier E."/>
            <person name="Salaun J.P."/>
            <person name="Berthou F."/>
            <person name="Amet Y."/>
        </authorList>
    </citation>
    <scope>FUNCTION</scope>
    <scope>CATALYTIC ACTIVITY</scope>
    <scope>PATHWAY</scope>
</reference>
<reference key="18">
    <citation type="journal article" date="2010" name="J. Lipid Res.">
        <title>Stereoselective epoxidation of the last double bond of polyunsaturated fatty acids by human cytochromes P450.</title>
        <authorList>
            <person name="Lucas D."/>
            <person name="Goulitquer S."/>
            <person name="Marienhagen J."/>
            <person name="Fer M."/>
            <person name="Dreano Y."/>
            <person name="Schwaneberg U."/>
            <person name="Amet Y."/>
            <person name="Corcos L."/>
        </authorList>
    </citation>
    <scope>FUNCTION</scope>
    <scope>CATALYTIC ACTIVITY</scope>
    <scope>PATHWAY</scope>
</reference>
<reference key="19">
    <citation type="journal article" date="2010" name="Rapid Commun. Mass Spectrom.">
        <title>Analysis of epoxyeicosatrienoic acids by chiral liquid chromatography/electron capture atmospheric pressure chemical ionization mass spectrometry using [13C]-analog internal standards.</title>
        <authorList>
            <person name="Mesaros C."/>
            <person name="Lee S.H."/>
            <person name="Blair I.A."/>
        </authorList>
    </citation>
    <scope>FUNCTION</scope>
    <scope>CATALYTIC ACTIVITY</scope>
    <scope>PATHWAY</scope>
</reference>
<reference key="20">
    <citation type="journal article" date="2011" name="Drug Metab. Dispos.">
        <title>Human CYP2S1 metabolizes cyclooxygenase- and lipoxygenase-derived eicosanoids.</title>
        <authorList>
            <person name="Bui P."/>
            <person name="Imaizumi S."/>
            <person name="Beedanagari S.R."/>
            <person name="Reddy S.T."/>
            <person name="Hankinson O."/>
        </authorList>
    </citation>
    <scope>FUNCTION</scope>
    <scope>CATALYTIC ACTIVITY</scope>
    <scope>PATHWAY</scope>
</reference>
<reference key="21">
    <citation type="journal article" date="2014" name="J. Proteomics">
        <title>An enzyme assisted RP-RPLC approach for in-depth analysis of human liver phosphoproteome.</title>
        <authorList>
            <person name="Bian Y."/>
            <person name="Song C."/>
            <person name="Cheng K."/>
            <person name="Dong M."/>
            <person name="Wang F."/>
            <person name="Huang J."/>
            <person name="Sun D."/>
            <person name="Wang L."/>
            <person name="Ye M."/>
            <person name="Zou H."/>
        </authorList>
    </citation>
    <scope>IDENTIFICATION BY MASS SPECTROMETRY [LARGE SCALE ANALYSIS]</scope>
    <source>
        <tissue>Liver</tissue>
    </source>
</reference>
<reference key="22">
    <citation type="journal article" date="2013" name="J. Biol. Chem.">
        <title>Human cytochrome P450 1A1 structure and utility in understanding drug and xenobiotic metabolism.</title>
        <authorList>
            <person name="Walsh A.A."/>
            <person name="Szklarz G.D."/>
            <person name="Scott E.E."/>
        </authorList>
    </citation>
    <scope>X-RAY CRYSTALLOGRAPHY (2.6 ANGSTROMS) OF 35-512 IN COMPLEX WITH HEME AND INHIBITOR ALPHA-NAPHTOFLAVONE</scope>
    <scope>COFACTOR</scope>
</reference>
<reference key="23">
    <citation type="journal article" date="1991" name="J. Biochem.">
        <title>Genetic linkage of lung cancer-associated MspI polymorphisms with amino acid replacement in the heme binding region of the human cytochrome P450IA1 gene.</title>
        <authorList>
            <person name="Hayashi S."/>
            <person name="Watanabe J."/>
            <person name="Nakachi K."/>
            <person name="Kawajiri K."/>
        </authorList>
    </citation>
    <scope>VARIANT VAL-462</scope>
</reference>
<reference key="24">
    <citation type="journal article" date="1996" name="Cancer Res.">
        <title>A C4887A polymorphism in exon 7 of human CYP1A1: population frequency, mutation linkages, and impact on lung cancer susceptibility.</title>
        <authorList>
            <person name="Cascorbi I."/>
            <person name="Brockmoller J."/>
            <person name="Roots I."/>
        </authorList>
    </citation>
    <scope>VARIANT ASN-461</scope>
</reference>
<reference key="25">
    <citation type="journal article" date="2000" name="Pharmacogenetics">
        <title>Variation in induced CYP1A1 levels: relationship to CYP1A1, Ah receptor and GSTM1 polymorphisms.</title>
        <authorList>
            <person name="Smart J."/>
            <person name="Daly A.K."/>
        </authorList>
    </citation>
    <scope>VARIANT TRP-279</scope>
</reference>
<reference key="26">
    <citation type="journal article" date="2001" name="Hum. Mutat.">
        <title>Detection of known and two novel (M331I and R464S) missense mutations in the human CYP1A1 gene in a French Caucasian population.</title>
        <authorList>
            <person name="Chevalier D."/>
            <person name="Allorge D."/>
            <person name="Lo-Guidice J.-M."/>
            <person name="Cauffiez C."/>
            <person name="Lhermitte M."/>
            <person name="Lafitte J.-J."/>
            <person name="Broly F."/>
        </authorList>
    </citation>
    <scope>VARIANTS ILE-331 AND SER-464</scope>
</reference>
<reference key="27">
    <citation type="journal article" date="2003" name="Drug Metab. Pharmacokinet.">
        <title>Novel nonsynonymous polymorphisms of the CYP1A1 Gene in Japanese.</title>
        <authorList>
            <person name="Saito M."/>
            <person name="Egashira M."/>
            <person name="Kiyotani K."/>
            <person name="Fujieda M."/>
            <person name="Yamazaki H."/>
            <person name="Kiyohara C."/>
            <person name="Kunitoh H."/>
            <person name="Kamataki T."/>
        </authorList>
    </citation>
    <scope>VARIANTS ASN-448; CYS-464; TRP-477 AND ARG-492</scope>
</reference>
<reference key="28">
    <citation type="journal article" date="2004" name="Pharmacogenomics">
        <title>Genetic variation in eleven phase I drug metabolism genes in an ethnically diverse population.</title>
        <authorList>
            <person name="Solus J.F."/>
            <person name="Arietta B.J."/>
            <person name="Harris J.R."/>
            <person name="Sexton D.P."/>
            <person name="Steward J.Q."/>
            <person name="McMunn C."/>
            <person name="Ihrie P."/>
            <person name="Mehall J.M."/>
            <person name="Edwards T.L."/>
            <person name="Dawson E.P."/>
        </authorList>
    </citation>
    <scope>VARIANTS ASP-45; THR-78; TRP-93; ARG-173; ASN-461; MET-482 AND ARG-492</scope>
</reference>
<reference key="29">
    <citation type="journal article" date="2005" name="Hum. Mutat.">
        <title>Toward the evaluation of function in genetic variability: characterizing human SNP frequencies and establishing BAC-transgenic mice carrying the human CYP1A1_CYP1A2 locus.</title>
        <authorList>
            <person name="Jiang Z."/>
            <person name="Dalton T.P."/>
            <person name="Jin L."/>
            <person name="Wang B."/>
            <person name="Tsuneoka Y."/>
            <person name="Shertzer H.G."/>
            <person name="Deka R."/>
            <person name="Nebert D.W."/>
        </authorList>
    </citation>
    <scope>VARIANTS ASP-45; THR-78; ASN-461 AND VAL-462</scope>
</reference>
<reference key="30">
    <citation type="journal article" date="2006" name="Science">
        <title>The consensus coding sequences of human breast and colorectal cancers.</title>
        <authorList>
            <person name="Sjoeblom T."/>
            <person name="Jones S."/>
            <person name="Wood L.D."/>
            <person name="Parsons D.W."/>
            <person name="Lin J."/>
            <person name="Barber T.D."/>
            <person name="Mandelker D."/>
            <person name="Leary R.J."/>
            <person name="Ptak J."/>
            <person name="Silliman N."/>
            <person name="Szabo S."/>
            <person name="Buckhaults P."/>
            <person name="Farrell C."/>
            <person name="Meeh P."/>
            <person name="Markowitz S.D."/>
            <person name="Willis J."/>
            <person name="Dawson D."/>
            <person name="Willson J.K.V."/>
            <person name="Gazdar A.F."/>
            <person name="Hartigan J."/>
            <person name="Wu L."/>
            <person name="Liu C."/>
            <person name="Parmigiani G."/>
            <person name="Park B.H."/>
            <person name="Bachman K.E."/>
            <person name="Papadopoulos N."/>
            <person name="Vogelstein B."/>
            <person name="Kinzler K.W."/>
            <person name="Velculescu V.E."/>
        </authorList>
    </citation>
    <scope>VARIANT [LARGE SCALE ANALYSIS] TRP-477</scope>
</reference>
<organism>
    <name type="scientific">Homo sapiens</name>
    <name type="common">Human</name>
    <dbReference type="NCBI Taxonomy" id="9606"/>
    <lineage>
        <taxon>Eukaryota</taxon>
        <taxon>Metazoa</taxon>
        <taxon>Chordata</taxon>
        <taxon>Craniata</taxon>
        <taxon>Vertebrata</taxon>
        <taxon>Euteleostomi</taxon>
        <taxon>Mammalia</taxon>
        <taxon>Eutheria</taxon>
        <taxon>Euarchontoglires</taxon>
        <taxon>Primates</taxon>
        <taxon>Haplorrhini</taxon>
        <taxon>Catarrhini</taxon>
        <taxon>Hominidae</taxon>
        <taxon>Homo</taxon>
    </lineage>
</organism>
<evidence type="ECO:0000250" key="1"/>
<evidence type="ECO:0000250" key="2">
    <source>
        <dbReference type="UniProtKB" id="P00185"/>
    </source>
</evidence>
<evidence type="ECO:0000269" key="3">
    <source>
    </source>
</evidence>
<evidence type="ECO:0000269" key="4">
    <source>
    </source>
</evidence>
<evidence type="ECO:0000269" key="5">
    <source>
    </source>
</evidence>
<evidence type="ECO:0000269" key="6">
    <source>
    </source>
</evidence>
<evidence type="ECO:0000269" key="7">
    <source>
    </source>
</evidence>
<evidence type="ECO:0000269" key="8">
    <source>
    </source>
</evidence>
<evidence type="ECO:0000269" key="9">
    <source>
    </source>
</evidence>
<evidence type="ECO:0000269" key="10">
    <source>
    </source>
</evidence>
<evidence type="ECO:0000269" key="11">
    <source>
    </source>
</evidence>
<evidence type="ECO:0000269" key="12">
    <source>
    </source>
</evidence>
<evidence type="ECO:0000269" key="13">
    <source>
    </source>
</evidence>
<evidence type="ECO:0000269" key="14">
    <source>
    </source>
</evidence>
<evidence type="ECO:0000269" key="15">
    <source>
    </source>
</evidence>
<evidence type="ECO:0000269" key="16">
    <source>
    </source>
</evidence>
<evidence type="ECO:0000269" key="17">
    <source>
    </source>
</evidence>
<evidence type="ECO:0000269" key="18">
    <source>
    </source>
</evidence>
<evidence type="ECO:0000269" key="19">
    <source>
    </source>
</evidence>
<evidence type="ECO:0000269" key="20">
    <source>
    </source>
</evidence>
<evidence type="ECO:0000269" key="21">
    <source>
    </source>
</evidence>
<evidence type="ECO:0000269" key="22">
    <source ref="6"/>
</evidence>
<evidence type="ECO:0000303" key="23">
    <source>
    </source>
</evidence>
<evidence type="ECO:0000303" key="24">
    <source>
    </source>
</evidence>
<evidence type="ECO:0000303" key="25">
    <source ref="5"/>
</evidence>
<evidence type="ECO:0000305" key="26"/>
<evidence type="ECO:0000305" key="27">
    <source>
    </source>
</evidence>
<evidence type="ECO:0000305" key="28">
    <source>
    </source>
</evidence>
<evidence type="ECO:0000305" key="29">
    <source>
    </source>
</evidence>
<evidence type="ECO:0000305" key="30">
    <source>
    </source>
</evidence>
<evidence type="ECO:0000305" key="31">
    <source>
    </source>
</evidence>
<evidence type="ECO:0000305" key="32">
    <source>
    </source>
</evidence>
<evidence type="ECO:0000305" key="33">
    <source>
    </source>
</evidence>
<evidence type="ECO:0000305" key="34">
    <source>
    </source>
</evidence>
<evidence type="ECO:0000305" key="35">
    <source>
    </source>
</evidence>
<evidence type="ECO:0000305" key="36">
    <source>
    </source>
</evidence>
<evidence type="ECO:0000312" key="37">
    <source>
        <dbReference type="HGNC" id="HGNC:2595"/>
    </source>
</evidence>
<evidence type="ECO:0007829" key="38">
    <source>
        <dbReference type="PDB" id="4I8V"/>
    </source>
</evidence>
<evidence type="ECO:0007829" key="39">
    <source>
        <dbReference type="PDB" id="6DWM"/>
    </source>
</evidence>
<evidence type="ECO:0007829" key="40">
    <source>
        <dbReference type="PDB" id="6UDL"/>
    </source>
</evidence>
<dbReference type="EC" id="1.14.14.1" evidence="7 9 13 16"/>
<dbReference type="EC" id="4.2.1.152" evidence="19"/>
<dbReference type="EMBL" id="X02612">
    <property type="protein sequence ID" value="CAA26458.1"/>
    <property type="molecule type" value="Genomic_DNA"/>
</dbReference>
<dbReference type="EMBL" id="K03191">
    <property type="protein sequence ID" value="AAA52139.1"/>
    <property type="molecule type" value="mRNA"/>
</dbReference>
<dbReference type="EMBL" id="X04300">
    <property type="protein sequence ID" value="CAA27843.1"/>
    <property type="molecule type" value="Genomic_DNA"/>
</dbReference>
<dbReference type="EMBL" id="AF253322">
    <property type="protein sequence ID" value="AAK25727.1"/>
    <property type="molecule type" value="Genomic_DNA"/>
</dbReference>
<dbReference type="EMBL" id="AM233518">
    <property type="protein sequence ID" value="CAJ80721.1"/>
    <property type="molecule type" value="mRNA"/>
</dbReference>
<dbReference type="EMBL" id="AM233519">
    <property type="protein sequence ID" value="CAJ80722.1"/>
    <property type="molecule type" value="mRNA"/>
</dbReference>
<dbReference type="EMBL" id="AM233520">
    <property type="protein sequence ID" value="CAJ80723.1"/>
    <property type="molecule type" value="mRNA"/>
</dbReference>
<dbReference type="EMBL" id="AK223113">
    <property type="protein sequence ID" value="BAD96833.1"/>
    <property type="molecule type" value="mRNA"/>
</dbReference>
<dbReference type="EMBL" id="AC091230">
    <property type="status" value="NOT_ANNOTATED_CDS"/>
    <property type="molecule type" value="Genomic_DNA"/>
</dbReference>
<dbReference type="EMBL" id="BC023019">
    <property type="protein sequence ID" value="AAH23019.1"/>
    <property type="molecule type" value="mRNA"/>
</dbReference>
<dbReference type="EMBL" id="M12079">
    <property type="protein sequence ID" value="AAA52152.1"/>
    <property type="molecule type" value="mRNA"/>
</dbReference>
<dbReference type="EMBL" id="AF040259">
    <property type="protein sequence ID" value="AAD10199.1"/>
    <property type="molecule type" value="mRNA"/>
</dbReference>
<dbReference type="CCDS" id="CCDS10268.1">
    <molecule id="P04798-1"/>
</dbReference>
<dbReference type="PIR" id="A24797">
    <property type="entry name" value="O4HU6"/>
</dbReference>
<dbReference type="RefSeq" id="NP_000490.1">
    <molecule id="P04798-1"/>
    <property type="nucleotide sequence ID" value="NM_000499.5"/>
</dbReference>
<dbReference type="RefSeq" id="NP_001306145.1">
    <property type="nucleotide sequence ID" value="NM_001319216.1"/>
</dbReference>
<dbReference type="RefSeq" id="NP_001306146.1">
    <molecule id="P04798-1"/>
    <property type="nucleotide sequence ID" value="NM_001319217.2"/>
</dbReference>
<dbReference type="PDB" id="4I8V">
    <property type="method" value="X-ray"/>
    <property type="resolution" value="2.60 A"/>
    <property type="chains" value="A/B/C/D=35-512"/>
</dbReference>
<dbReference type="PDB" id="6DWM">
    <property type="method" value="X-ray"/>
    <property type="resolution" value="2.85 A"/>
    <property type="chains" value="A/B/C/D=35-512"/>
</dbReference>
<dbReference type="PDB" id="6DWN">
    <property type="method" value="X-ray"/>
    <property type="resolution" value="3.00 A"/>
    <property type="chains" value="A/B/C/D=35-512"/>
</dbReference>
<dbReference type="PDB" id="6O5Y">
    <property type="method" value="X-ray"/>
    <property type="resolution" value="3.17 A"/>
    <property type="chains" value="A/B/C/D=35-512"/>
</dbReference>
<dbReference type="PDB" id="6UDL">
    <property type="method" value="X-ray"/>
    <property type="resolution" value="2.85 A"/>
    <property type="chains" value="A/B/C/D=35-512"/>
</dbReference>
<dbReference type="PDB" id="6UDM">
    <property type="method" value="X-ray"/>
    <property type="resolution" value="3.08 A"/>
    <property type="chains" value="A/B/C/D=35-512"/>
</dbReference>
<dbReference type="PDBsum" id="4I8V"/>
<dbReference type="PDBsum" id="6DWM"/>
<dbReference type="PDBsum" id="6DWN"/>
<dbReference type="PDBsum" id="6O5Y"/>
<dbReference type="PDBsum" id="6UDL"/>
<dbReference type="PDBsum" id="6UDM"/>
<dbReference type="SMR" id="P04798"/>
<dbReference type="BioGRID" id="107923">
    <property type="interactions" value="79"/>
</dbReference>
<dbReference type="FunCoup" id="P04798">
    <property type="interactions" value="487"/>
</dbReference>
<dbReference type="IntAct" id="P04798">
    <property type="interactions" value="53"/>
</dbReference>
<dbReference type="STRING" id="9606.ENSP00000378488"/>
<dbReference type="BindingDB" id="P04798"/>
<dbReference type="ChEMBL" id="CHEMBL2231"/>
<dbReference type="DrugBank" id="DB08496">
    <property type="generic name" value="(R)-warfarin"/>
</dbReference>
<dbReference type="DrugBank" id="DB02342">
    <property type="generic name" value="2-Methoxyestradiol"/>
</dbReference>
<dbReference type="DrugBank" id="DB00518">
    <property type="generic name" value="Albendazole"/>
</dbReference>
<dbReference type="DrugBank" id="DB01118">
    <property type="generic name" value="Amiodarone"/>
</dbReference>
<dbReference type="DrugBank" id="DB00381">
    <property type="generic name" value="Amlodipine"/>
</dbReference>
<dbReference type="DrugBank" id="DB00613">
    <property type="generic name" value="Amodiaquine"/>
</dbReference>
<dbReference type="DrugBank" id="DB00972">
    <property type="generic name" value="Azelastine"/>
</dbReference>
<dbReference type="DrugBank" id="DB04957">
    <property type="generic name" value="Azimilide"/>
</dbReference>
<dbReference type="DrugBank" id="DB04975">
    <property type="generic name" value="Banoxantrone"/>
</dbReference>
<dbReference type="DrugBank" id="DB06770">
    <property type="generic name" value="Benzyl alcohol"/>
</dbReference>
<dbReference type="DrugBank" id="DB01393">
    <property type="generic name" value="Bezafibrate"/>
</dbReference>
<dbReference type="DrugBank" id="DB00201">
    <property type="generic name" value="Caffeine"/>
</dbReference>
<dbReference type="DrugBank" id="DB09061">
    <property type="generic name" value="Cannabidiol"/>
</dbReference>
<dbReference type="DrugBank" id="DB14737">
    <property type="generic name" value="Cannabinol"/>
</dbReference>
<dbReference type="DrugBank" id="DB01136">
    <property type="generic name" value="Carvedilol"/>
</dbReference>
<dbReference type="DrugBank" id="DB00608">
    <property type="generic name" value="Chloroquine"/>
</dbReference>
<dbReference type="DrugBank" id="DB00356">
    <property type="generic name" value="Chlorzoxazone"/>
</dbReference>
<dbReference type="DrugBank" id="DB00169">
    <property type="generic name" value="Cholecalciferol"/>
</dbReference>
<dbReference type="DrugBank" id="DB00568">
    <property type="generic name" value="Cinnarizine"/>
</dbReference>
<dbReference type="DrugBank" id="DB01407">
    <property type="generic name" value="Clenbuterol"/>
</dbReference>
<dbReference type="DrugBank" id="DB00636">
    <property type="generic name" value="Clofibrate"/>
</dbReference>
<dbReference type="DrugBank" id="DB00575">
    <property type="generic name" value="Clonidine"/>
</dbReference>
<dbReference type="DrugBank" id="DB00363">
    <property type="generic name" value="Clozapine"/>
</dbReference>
<dbReference type="DrugBank" id="DB12483">
    <property type="generic name" value="Copanlisib"/>
</dbReference>
<dbReference type="DrugBank" id="DB00851">
    <property type="generic name" value="Dacarbazine"/>
</dbReference>
<dbReference type="DrugBank" id="DB06292">
    <property type="generic name" value="Dapagliflozin"/>
</dbReference>
<dbReference type="DrugBank" id="DB01254">
    <property type="generic name" value="Dasatinib"/>
</dbReference>
<dbReference type="DrugBank" id="DB04840">
    <property type="generic name" value="Debrisoquine"/>
</dbReference>
<dbReference type="DrugBank" id="DB01234">
    <property type="generic name" value="Dexamethasone"/>
</dbReference>
<dbReference type="DrugBank" id="DB14649">
    <property type="generic name" value="Dexamethasone acetate"/>
</dbReference>
<dbReference type="DrugBank" id="DB00633">
    <property type="generic name" value="Dexmedetomidine"/>
</dbReference>
<dbReference type="DrugBank" id="DB11511">
    <property type="generic name" value="Difloxacin"/>
</dbReference>
<dbReference type="DrugBank" id="DB08995">
    <property type="generic name" value="Diosmin"/>
</dbReference>
<dbReference type="DrugBank" id="DB05928">
    <property type="generic name" value="Dovitinib"/>
</dbReference>
<dbReference type="DrugBank" id="DB00470">
    <property type="generic name" value="Dronabinol"/>
</dbReference>
<dbReference type="DrugBank" id="DB08846">
    <property type="generic name" value="Ellagic acid"/>
</dbReference>
<dbReference type="DrugBank" id="DB00530">
    <property type="generic name" value="Erlotinib"/>
</dbReference>
<dbReference type="DrugBank" id="DB00783">
    <property type="generic name" value="Estradiol"/>
</dbReference>
<dbReference type="DrugBank" id="DB13952">
    <property type="generic name" value="Estradiol acetate"/>
</dbReference>
<dbReference type="DrugBank" id="DB13953">
    <property type="generic name" value="Estradiol benzoate"/>
</dbReference>
<dbReference type="DrugBank" id="DB13954">
    <property type="generic name" value="Estradiol cypionate"/>
</dbReference>
<dbReference type="DrugBank" id="DB13955">
    <property type="generic name" value="Estradiol dienanthate"/>
</dbReference>
<dbReference type="DrugBank" id="DB13956">
    <property type="generic name" value="Estradiol valerate"/>
</dbReference>
<dbReference type="DrugBank" id="DB00655">
    <property type="generic name" value="Estrone"/>
</dbReference>
<dbReference type="DrugBank" id="DB00898">
    <property type="generic name" value="Ethanol"/>
</dbReference>
<dbReference type="DrugBank" id="DB16165">
    <property type="generic name" value="Finerenone"/>
</dbReference>
<dbReference type="DrugBank" id="DB04841">
    <property type="generic name" value="Flunarizine"/>
</dbReference>
<dbReference type="DrugBank" id="DB00499">
    <property type="generic name" value="Flutamide"/>
</dbReference>
<dbReference type="DrugBank" id="DB01095">
    <property type="generic name" value="Fluvastatin"/>
</dbReference>
<dbReference type="DrugBank" id="DB00176">
    <property type="generic name" value="Fluvoxamine"/>
</dbReference>
<dbReference type="DrugBank" id="DB00317">
    <property type="generic name" value="Gefitinib"/>
</dbReference>
<dbReference type="DrugBank" id="DB01381">
    <property type="generic name" value="Ginkgo biloba"/>
</dbReference>
<dbReference type="DrugBank" id="DB00889">
    <property type="generic name" value="Granisetron"/>
</dbReference>
<dbReference type="DrugBank" id="DB00502">
    <property type="generic name" value="Haloperidol"/>
</dbReference>
<dbReference type="DrugBank" id="DB12379">
    <property type="generic name" value="Indirubin"/>
</dbReference>
<dbReference type="DrugBank" id="DB01064">
    <property type="generic name" value="Isoprenaline"/>
</dbReference>
<dbReference type="DrugBank" id="DB11757">
    <property type="generic name" value="Istradefylline"/>
</dbReference>
<dbReference type="DrugBank" id="DB01167">
    <property type="generic name" value="Itraconazole"/>
</dbReference>
<dbReference type="DrugBank" id="DB01026">
    <property type="generic name" value="Ketoconazole"/>
</dbReference>
<dbReference type="DrugBank" id="DB00448">
    <property type="generic name" value="Lansoprazole"/>
</dbReference>
<dbReference type="DrugBank" id="DB16217">
    <property type="generic name" value="Leniolisib"/>
</dbReference>
<dbReference type="DrugBank" id="DB00455">
    <property type="generic name" value="Loratadine"/>
</dbReference>
<dbReference type="DrugBank" id="DB04871">
    <property type="generic name" value="Lorcaserin"/>
</dbReference>
<dbReference type="DrugBank" id="DB09238">
    <property type="generic name" value="Manidipine"/>
</dbReference>
<dbReference type="DrugBank" id="DB00643">
    <property type="generic name" value="Mebendazole"/>
</dbReference>
<dbReference type="DrugBank" id="DB14009">
    <property type="generic name" value="Medical Cannabis"/>
</dbReference>
<dbReference type="DrugBank" id="DB01065">
    <property type="generic name" value="Melatonin"/>
</dbReference>
<dbReference type="DrugBank" id="DB00170">
    <property type="generic name" value="Menadione"/>
</dbReference>
<dbReference type="DrugBank" id="DB00553">
    <property type="generic name" value="Methoxsalen"/>
</dbReference>
<dbReference type="DrugBank" id="DB14011">
    <property type="generic name" value="Nabiximols"/>
</dbReference>
<dbReference type="DrugBank" id="DB00184">
    <property type="generic name" value="Nicotine"/>
</dbReference>
<dbReference type="DrugBank" id="DB01115">
    <property type="generic name" value="Nifedipine"/>
</dbReference>
<dbReference type="DrugBank" id="DB00325">
    <property type="generic name" value="Nitroprusside"/>
</dbReference>
<dbReference type="DrugBank" id="DB01059">
    <property type="generic name" value="Norfloxacin"/>
</dbReference>
<dbReference type="DrugBank" id="DB00338">
    <property type="generic name" value="Omeprazole"/>
</dbReference>
<dbReference type="DrugBank" id="DB00738">
    <property type="generic name" value="Pentamidine"/>
</dbReference>
<dbReference type="DrugBank" id="DB08922">
    <property type="generic name" value="Perospirone"/>
</dbReference>
<dbReference type="DrugBank" id="DB03783">
    <property type="generic name" value="Phenacetin"/>
</dbReference>
<dbReference type="DrugBank" id="DB01174">
    <property type="generic name" value="Phenobarbital"/>
</dbReference>
<dbReference type="DrugBank" id="DB00466">
    <property type="generic name" value="Picrotoxin"/>
</dbReference>
<dbReference type="DrugBank" id="DB01132">
    <property type="generic name" value="Pioglitazone"/>
</dbReference>
<dbReference type="DrugBank" id="DB01087">
    <property type="generic name" value="Primaquine"/>
</dbReference>
<dbReference type="DrugBank" id="DB00396">
    <property type="generic name" value="Progesterone"/>
</dbReference>
<dbReference type="DrugBank" id="DB00818">
    <property type="generic name" value="Propofol"/>
</dbReference>
<dbReference type="DrugBank" id="DB00571">
    <property type="generic name" value="Propranolol"/>
</dbReference>
<dbReference type="DrugBank" id="DB00550">
    <property type="generic name" value="Propylthiouracil"/>
</dbReference>
<dbReference type="DrugBank" id="DB00165">
    <property type="generic name" value="Pyridoxine"/>
</dbReference>
<dbReference type="DrugBank" id="DB00908">
    <property type="generic name" value="Quinidine"/>
</dbReference>
<dbReference type="DrugBank" id="DB00468">
    <property type="generic name" value="Quinine"/>
</dbReference>
<dbReference type="DrugBank" id="DB01129">
    <property type="generic name" value="Rabeprazole"/>
</dbReference>
<dbReference type="DrugBank" id="DB02709">
    <property type="generic name" value="Resveratrol"/>
</dbReference>
<dbReference type="DrugBank" id="DB00740">
    <property type="generic name" value="Riluzole"/>
</dbReference>
<dbReference type="DrugBank" id="DB08931">
    <property type="generic name" value="Riociguat"/>
</dbReference>
<dbReference type="DrugBank" id="DB15305">
    <property type="generic name" value="Risdiplam"/>
</dbReference>
<dbReference type="DrugBank" id="DB06176">
    <property type="generic name" value="Romidepsin"/>
</dbReference>
<dbReference type="DrugBank" id="DB06654">
    <property type="generic name" value="Safinamide"/>
</dbReference>
<dbReference type="DrugBank" id="DB01591">
    <property type="generic name" value="Solifenacin"/>
</dbReference>
<dbReference type="DrugBank" id="DB00428">
    <property type="generic name" value="Streptozocin"/>
</dbReference>
<dbReference type="DrugBank" id="DB00605">
    <property type="generic name" value="Sulindac"/>
</dbReference>
<dbReference type="DrugBank" id="DB00675">
    <property type="generic name" value="Tamoxifen"/>
</dbReference>
<dbReference type="DrugBank" id="DB04905">
    <property type="generic name" value="Tesmilifene"/>
</dbReference>
<dbReference type="DrugBank" id="DB00624">
    <property type="generic name" value="Testosterone"/>
</dbReference>
<dbReference type="DrugBank" id="DB13943">
    <property type="generic name" value="Testosterone cypionate"/>
</dbReference>
<dbReference type="DrugBank" id="DB13944">
    <property type="generic name" value="Testosterone enanthate"/>
</dbReference>
<dbReference type="DrugBank" id="DB13946">
    <property type="generic name" value="Testosterone undecanoate"/>
</dbReference>
<dbReference type="DrugBank" id="DB01041">
    <property type="generic name" value="Thalidomide"/>
</dbReference>
<dbReference type="DrugBank" id="DB00277">
    <property type="generic name" value="Theophylline"/>
</dbReference>
<dbReference type="DrugBank" id="DB00730">
    <property type="generic name" value="Thiabendazole"/>
</dbReference>
<dbReference type="DrugBank" id="DB01685">
    <property type="generic name" value="Topiroxostat"/>
</dbReference>
<dbReference type="DrugBank" id="DB00539">
    <property type="generic name" value="Toremifene"/>
</dbReference>
<dbReference type="DrugBank" id="DB00755">
    <property type="generic name" value="Tretinoin"/>
</dbReference>
<dbReference type="DrugBank" id="DB12245">
    <property type="generic name" value="Triclabendazole"/>
</dbReference>
<dbReference type="DrugBank" id="DB11155">
    <property type="generic name" value="Triclocarban"/>
</dbReference>
<dbReference type="DrugBank" id="DB00197">
    <property type="generic name" value="Troglitazone"/>
</dbReference>
<dbReference type="DrugCentral" id="P04798"/>
<dbReference type="GuidetoPHARMACOLOGY" id="1318"/>
<dbReference type="SwissLipids" id="SLP:000001329"/>
<dbReference type="GlyCosmos" id="P04798">
    <property type="glycosylation" value="1 site, No reported glycans"/>
</dbReference>
<dbReference type="GlyGen" id="P04798">
    <property type="glycosylation" value="2 sites, 1 O-linked glycan (1 site)"/>
</dbReference>
<dbReference type="iPTMnet" id="P04798"/>
<dbReference type="PhosphoSitePlus" id="P04798"/>
<dbReference type="BioMuta" id="CYP1A1"/>
<dbReference type="DMDM" id="117139"/>
<dbReference type="jPOST" id="P04798"/>
<dbReference type="MassIVE" id="P04798"/>
<dbReference type="PaxDb" id="9606-ENSP00000369050"/>
<dbReference type="PeptideAtlas" id="P04798"/>
<dbReference type="ProteomicsDB" id="51744">
    <molecule id="P04798-1"/>
</dbReference>
<dbReference type="ProteomicsDB" id="654"/>
<dbReference type="ProteomicsDB" id="655"/>
<dbReference type="Antibodypedia" id="4356">
    <property type="antibodies" value="526 antibodies from 38 providers"/>
</dbReference>
<dbReference type="DNASU" id="1543"/>
<dbReference type="Ensembl" id="ENST00000379727.8">
    <molecule id="P04798-1"/>
    <property type="protein sequence ID" value="ENSP00000369050.3"/>
    <property type="gene ID" value="ENSG00000140465.15"/>
</dbReference>
<dbReference type="Ensembl" id="ENST00000395048.6">
    <molecule id="P04798-1"/>
    <property type="protein sequence ID" value="ENSP00000378488.2"/>
    <property type="gene ID" value="ENSG00000140465.15"/>
</dbReference>
<dbReference type="Ensembl" id="ENST00000562201.5">
    <molecule id="P04798-2"/>
    <property type="protein sequence ID" value="ENSP00000455340.1"/>
    <property type="gene ID" value="ENSG00000140465.15"/>
</dbReference>
<dbReference type="Ensembl" id="ENST00000564596.5">
    <molecule id="P04798-3"/>
    <property type="protein sequence ID" value="ENSP00000457668.1"/>
    <property type="gene ID" value="ENSG00000140465.15"/>
</dbReference>
<dbReference type="Ensembl" id="ENST00000567032.5">
    <molecule id="P04798-1"/>
    <property type="protein sequence ID" value="ENSP00000456585.1"/>
    <property type="gene ID" value="ENSG00000140465.15"/>
</dbReference>
<dbReference type="Ensembl" id="ENST00000569630.5">
    <molecule id="P04798-2"/>
    <property type="protein sequence ID" value="ENSP00000455051.1"/>
    <property type="gene ID" value="ENSG00000140465.15"/>
</dbReference>
<dbReference type="GeneID" id="1543"/>
<dbReference type="KEGG" id="hsa:1543"/>
<dbReference type="MANE-Select" id="ENST00000379727.8">
    <property type="protein sequence ID" value="ENSP00000369050.3"/>
    <property type="RefSeq nucleotide sequence ID" value="NM_001319217.2"/>
    <property type="RefSeq protein sequence ID" value="NP_001306146.1"/>
</dbReference>
<dbReference type="UCSC" id="uc002ayp.4">
    <molecule id="P04798-1"/>
    <property type="organism name" value="human"/>
</dbReference>
<dbReference type="AGR" id="HGNC:2595"/>
<dbReference type="CTD" id="1543"/>
<dbReference type="DisGeNET" id="1543"/>
<dbReference type="GeneCards" id="CYP1A1"/>
<dbReference type="HGNC" id="HGNC:2595">
    <property type="gene designation" value="CYP1A1"/>
</dbReference>
<dbReference type="HPA" id="ENSG00000140465">
    <property type="expression patterns" value="Tissue enhanced (liver, urinary bladder)"/>
</dbReference>
<dbReference type="MIM" id="108330">
    <property type="type" value="gene"/>
</dbReference>
<dbReference type="neXtProt" id="NX_P04798"/>
<dbReference type="OpenTargets" id="ENSG00000140465"/>
<dbReference type="PharmGKB" id="PA27092"/>
<dbReference type="VEuPathDB" id="HostDB:ENSG00000140465"/>
<dbReference type="eggNOG" id="KOG0156">
    <property type="taxonomic scope" value="Eukaryota"/>
</dbReference>
<dbReference type="GeneTree" id="ENSGT00950000183037"/>
<dbReference type="HOGENOM" id="CLU_1209426_0_0_1"/>
<dbReference type="InParanoid" id="P04798"/>
<dbReference type="OMA" id="DPRAYWQ"/>
<dbReference type="OrthoDB" id="1055148at2759"/>
<dbReference type="PAN-GO" id="P04798">
    <property type="GO annotations" value="2 GO annotations based on evolutionary models"/>
</dbReference>
<dbReference type="PhylomeDB" id="P04798"/>
<dbReference type="TreeFam" id="TF105095"/>
<dbReference type="PathwayCommons" id="P04798"/>
<dbReference type="Reactome" id="R-HSA-1989781">
    <property type="pathway name" value="PPARA activates gene expression"/>
</dbReference>
<dbReference type="Reactome" id="R-HSA-211981">
    <property type="pathway name" value="Xenobiotics"/>
</dbReference>
<dbReference type="Reactome" id="R-HSA-2142670">
    <property type="pathway name" value="Synthesis of epoxy (EET) and dihydroxyeicosatrienoic acids (DHET)"/>
</dbReference>
<dbReference type="Reactome" id="R-HSA-2142816">
    <property type="pathway name" value="Synthesis of (16-20)-hydroxyeicosatetraenoic acids (HETE)"/>
</dbReference>
<dbReference type="Reactome" id="R-HSA-9018681">
    <property type="pathway name" value="Biosynthesis of protectins"/>
</dbReference>
<dbReference type="SABIO-RK" id="P04798"/>
<dbReference type="SignaLink" id="P04798"/>
<dbReference type="SIGNOR" id="P04798"/>
<dbReference type="UniPathway" id="UPA00199"/>
<dbReference type="UniPathway" id="UPA00912"/>
<dbReference type="BioGRID-ORCS" id="1543">
    <property type="hits" value="9 hits in 1148 CRISPR screens"/>
</dbReference>
<dbReference type="ChiTaRS" id="CYP1A1">
    <property type="organism name" value="human"/>
</dbReference>
<dbReference type="EvolutionaryTrace" id="P04798"/>
<dbReference type="GeneWiki" id="Cytochrome_P450,_family_1,_member_A1"/>
<dbReference type="GenomeRNAi" id="1543"/>
<dbReference type="Pharos" id="P04798">
    <property type="development level" value="Tchem"/>
</dbReference>
<dbReference type="PRO" id="PR:P04798"/>
<dbReference type="Proteomes" id="UP000005640">
    <property type="component" value="Chromosome 15"/>
</dbReference>
<dbReference type="RNAct" id="P04798">
    <property type="molecule type" value="protein"/>
</dbReference>
<dbReference type="Bgee" id="ENSG00000140465">
    <property type="expression patterns" value="Expressed in male germ line stem cell (sensu Vertebrata) in testis and 116 other cell types or tissues"/>
</dbReference>
<dbReference type="ExpressionAtlas" id="P04798">
    <property type="expression patterns" value="baseline and differential"/>
</dbReference>
<dbReference type="GO" id="GO:0005789">
    <property type="term" value="C:endoplasmic reticulum membrane"/>
    <property type="evidence" value="ECO:0000304"/>
    <property type="project" value="Reactome"/>
</dbReference>
<dbReference type="GO" id="GO:0043231">
    <property type="term" value="C:intracellular membrane-bounded organelle"/>
    <property type="evidence" value="ECO:0000318"/>
    <property type="project" value="GO_Central"/>
</dbReference>
<dbReference type="GO" id="GO:0005743">
    <property type="term" value="C:mitochondrial inner membrane"/>
    <property type="evidence" value="ECO:0000250"/>
    <property type="project" value="UniProtKB"/>
</dbReference>
<dbReference type="GO" id="GO:0005739">
    <property type="term" value="C:mitochondrion"/>
    <property type="evidence" value="ECO:0006056"/>
    <property type="project" value="FlyBase"/>
</dbReference>
<dbReference type="GO" id="GO:0008391">
    <property type="term" value="F:arachidonate monooxygenase activity"/>
    <property type="evidence" value="ECO:0000314"/>
    <property type="project" value="UniProtKB"/>
</dbReference>
<dbReference type="GO" id="GO:0032451">
    <property type="term" value="F:demethylase activity"/>
    <property type="evidence" value="ECO:0007669"/>
    <property type="project" value="Ensembl"/>
</dbReference>
<dbReference type="GO" id="GO:0019899">
    <property type="term" value="F:enzyme binding"/>
    <property type="evidence" value="ECO:0007669"/>
    <property type="project" value="Ensembl"/>
</dbReference>
<dbReference type="GO" id="GO:0101020">
    <property type="term" value="F:estrogen 16-alpha-hydroxylase activity"/>
    <property type="evidence" value="ECO:0000314"/>
    <property type="project" value="UniProtKB"/>
</dbReference>
<dbReference type="GO" id="GO:0101021">
    <property type="term" value="F:estrogen 2-hydroxylase activity"/>
    <property type="evidence" value="ECO:0000314"/>
    <property type="project" value="UniProtKB"/>
</dbReference>
<dbReference type="GO" id="GO:0016711">
    <property type="term" value="F:flavonoid 3'-monooxygenase activity"/>
    <property type="evidence" value="ECO:0007669"/>
    <property type="project" value="Ensembl"/>
</dbReference>
<dbReference type="GO" id="GO:0020037">
    <property type="term" value="F:heme binding"/>
    <property type="evidence" value="ECO:0007669"/>
    <property type="project" value="InterPro"/>
</dbReference>
<dbReference type="GO" id="GO:0030544">
    <property type="term" value="F:Hsp70 protein binding"/>
    <property type="evidence" value="ECO:0000250"/>
    <property type="project" value="UniProtKB"/>
</dbReference>
<dbReference type="GO" id="GO:0051879">
    <property type="term" value="F:Hsp90 protein binding"/>
    <property type="evidence" value="ECO:0000250"/>
    <property type="project" value="UniProtKB"/>
</dbReference>
<dbReference type="GO" id="GO:0106256">
    <property type="term" value="F:hydroperoxy icosatetraenoate dehydratase activity"/>
    <property type="evidence" value="ECO:0007669"/>
    <property type="project" value="UniProtKB-EC"/>
</dbReference>
<dbReference type="GO" id="GO:0005506">
    <property type="term" value="F:iron ion binding"/>
    <property type="evidence" value="ECO:0007669"/>
    <property type="project" value="InterPro"/>
</dbReference>
<dbReference type="GO" id="GO:0120319">
    <property type="term" value="F:long-chain fatty acid omega-1 hydroxylase activity"/>
    <property type="evidence" value="ECO:0000314"/>
    <property type="project" value="UniProtKB"/>
</dbReference>
<dbReference type="GO" id="GO:0102033">
    <property type="term" value="F:long-chain fatty acid omega-hydroxylase activity"/>
    <property type="evidence" value="ECO:0000314"/>
    <property type="project" value="UniProtKB"/>
</dbReference>
<dbReference type="GO" id="GO:0004497">
    <property type="term" value="F:monooxygenase activity"/>
    <property type="evidence" value="ECO:0000318"/>
    <property type="project" value="GO_Central"/>
</dbReference>
<dbReference type="GO" id="GO:0016491">
    <property type="term" value="F:oxidoreductase activity"/>
    <property type="evidence" value="ECO:0000314"/>
    <property type="project" value="BHF-UCL"/>
</dbReference>
<dbReference type="GO" id="GO:0016679">
    <property type="term" value="F:oxidoreductase activity, acting on diphenols and related substances as donors"/>
    <property type="evidence" value="ECO:0007669"/>
    <property type="project" value="Ensembl"/>
</dbReference>
<dbReference type="GO" id="GO:0019825">
    <property type="term" value="F:oxygen binding"/>
    <property type="evidence" value="ECO:0000304"/>
    <property type="project" value="ProtInc"/>
</dbReference>
<dbReference type="GO" id="GO:0070576">
    <property type="term" value="F:vitamin D 24-hydroxylase activity"/>
    <property type="evidence" value="ECO:0000314"/>
    <property type="project" value="BHF-UCL"/>
</dbReference>
<dbReference type="GO" id="GO:0042904">
    <property type="term" value="P:9-cis-retinoic acid biosynthetic process"/>
    <property type="evidence" value="ECO:0007669"/>
    <property type="project" value="Ensembl"/>
</dbReference>
<dbReference type="GO" id="GO:0009308">
    <property type="term" value="P:amine metabolic process"/>
    <property type="evidence" value="ECO:0007669"/>
    <property type="project" value="Ensembl"/>
</dbReference>
<dbReference type="GO" id="GO:0043010">
    <property type="term" value="P:camera-type eye development"/>
    <property type="evidence" value="ECO:0007669"/>
    <property type="project" value="Ensembl"/>
</dbReference>
<dbReference type="GO" id="GO:0071280">
    <property type="term" value="P:cellular response to copper ion"/>
    <property type="evidence" value="ECO:0007669"/>
    <property type="project" value="Ensembl"/>
</dbReference>
<dbReference type="GO" id="GO:0009804">
    <property type="term" value="P:coumarin metabolic process"/>
    <property type="evidence" value="ECO:0007669"/>
    <property type="project" value="Ensembl"/>
</dbReference>
<dbReference type="GO" id="GO:0019341">
    <property type="term" value="P:dibenzo-p-dioxin catabolic process"/>
    <property type="evidence" value="ECO:0007669"/>
    <property type="project" value="Ensembl"/>
</dbReference>
<dbReference type="GO" id="GO:0048565">
    <property type="term" value="P:digestive tract development"/>
    <property type="evidence" value="ECO:0007669"/>
    <property type="project" value="Ensembl"/>
</dbReference>
<dbReference type="GO" id="GO:0019373">
    <property type="term" value="P:epoxygenase P450 pathway"/>
    <property type="evidence" value="ECO:0000304"/>
    <property type="project" value="Reactome"/>
</dbReference>
<dbReference type="GO" id="GO:0008210">
    <property type="term" value="P:estrogen metabolic process"/>
    <property type="evidence" value="ECO:0000314"/>
    <property type="project" value="UniProtKB"/>
</dbReference>
<dbReference type="GO" id="GO:0009692">
    <property type="term" value="P:ethylene metabolic process"/>
    <property type="evidence" value="ECO:0000304"/>
    <property type="project" value="Reactome"/>
</dbReference>
<dbReference type="GO" id="GO:0006631">
    <property type="term" value="P:fatty acid metabolic process"/>
    <property type="evidence" value="ECO:0000314"/>
    <property type="project" value="UniProtKB"/>
</dbReference>
<dbReference type="GO" id="GO:0009812">
    <property type="term" value="P:flavonoid metabolic process"/>
    <property type="evidence" value="ECO:0007669"/>
    <property type="project" value="Ensembl"/>
</dbReference>
<dbReference type="GO" id="GO:0070365">
    <property type="term" value="P:hepatocyte differentiation"/>
    <property type="evidence" value="ECO:0007669"/>
    <property type="project" value="Ensembl"/>
</dbReference>
<dbReference type="GO" id="GO:0050665">
    <property type="term" value="P:hydrogen peroxide biosynthetic process"/>
    <property type="evidence" value="ECO:0007669"/>
    <property type="project" value="Ensembl"/>
</dbReference>
<dbReference type="GO" id="GO:0017143">
    <property type="term" value="P:insecticide metabolic process"/>
    <property type="evidence" value="ECO:0007669"/>
    <property type="project" value="Ensembl"/>
</dbReference>
<dbReference type="GO" id="GO:0002933">
    <property type="term" value="P:lipid hydroxylation"/>
    <property type="evidence" value="ECO:0000314"/>
    <property type="project" value="BHF-UCL"/>
</dbReference>
<dbReference type="GO" id="GO:0042759">
    <property type="term" value="P:long-chain fatty acid biosynthetic process"/>
    <property type="evidence" value="ECO:0000304"/>
    <property type="project" value="Reactome"/>
</dbReference>
<dbReference type="GO" id="GO:0001676">
    <property type="term" value="P:long-chain fatty acid metabolic process"/>
    <property type="evidence" value="ECO:0000314"/>
    <property type="project" value="UniProtKB"/>
</dbReference>
<dbReference type="GO" id="GO:0060137">
    <property type="term" value="P:maternal process involved in parturition"/>
    <property type="evidence" value="ECO:0007669"/>
    <property type="project" value="Ensembl"/>
</dbReference>
<dbReference type="GO" id="GO:0046209">
    <property type="term" value="P:nitric oxide metabolic process"/>
    <property type="evidence" value="ECO:0007669"/>
    <property type="project" value="Ensembl"/>
</dbReference>
<dbReference type="GO" id="GO:0097267">
    <property type="term" value="P:omega-hydroxylase P450 pathway"/>
    <property type="evidence" value="ECO:0000304"/>
    <property type="project" value="Reactome"/>
</dbReference>
<dbReference type="GO" id="GO:0018958">
    <property type="term" value="P:phenol-containing compound metabolic process"/>
    <property type="evidence" value="ECO:0007669"/>
    <property type="project" value="Ensembl"/>
</dbReference>
<dbReference type="GO" id="GO:0006778">
    <property type="term" value="P:porphyrin-containing compound metabolic process"/>
    <property type="evidence" value="ECO:0007669"/>
    <property type="project" value="Ensembl"/>
</dbReference>
<dbReference type="GO" id="GO:1900087">
    <property type="term" value="P:positive regulation of G1/S transition of mitotic cell cycle"/>
    <property type="evidence" value="ECO:0007669"/>
    <property type="project" value="Ensembl"/>
</dbReference>
<dbReference type="GO" id="GO:1904612">
    <property type="term" value="P:response to 2,3,7,8-tetrachlorodibenzodioxine"/>
    <property type="evidence" value="ECO:0007669"/>
    <property type="project" value="Ensembl"/>
</dbReference>
<dbReference type="GO" id="GO:1904681">
    <property type="term" value="P:response to 3-methylcholanthrene"/>
    <property type="evidence" value="ECO:0007669"/>
    <property type="project" value="Ensembl"/>
</dbReference>
<dbReference type="GO" id="GO:1904010">
    <property type="term" value="P:response to Aroclor 1254"/>
    <property type="evidence" value="ECO:0007669"/>
    <property type="project" value="Ensembl"/>
</dbReference>
<dbReference type="GO" id="GO:0046685">
    <property type="term" value="P:response to arsenic-containing substance"/>
    <property type="evidence" value="ECO:0007669"/>
    <property type="project" value="Ensembl"/>
</dbReference>
<dbReference type="GO" id="GO:1901497">
    <property type="term" value="P:response to diphenyl ether"/>
    <property type="evidence" value="ECO:0007669"/>
    <property type="project" value="Ensembl"/>
</dbReference>
<dbReference type="GO" id="GO:0032094">
    <property type="term" value="P:response to food"/>
    <property type="evidence" value="ECO:0007669"/>
    <property type="project" value="Ensembl"/>
</dbReference>
<dbReference type="GO" id="GO:0033595">
    <property type="term" value="P:response to genistein"/>
    <property type="evidence" value="ECO:0007669"/>
    <property type="project" value="Ensembl"/>
</dbReference>
<dbReference type="GO" id="GO:0009635">
    <property type="term" value="P:response to herbicide"/>
    <property type="evidence" value="ECO:0007669"/>
    <property type="project" value="Ensembl"/>
</dbReference>
<dbReference type="GO" id="GO:0055093">
    <property type="term" value="P:response to hyperoxia"/>
    <property type="evidence" value="ECO:0007669"/>
    <property type="project" value="Ensembl"/>
</dbReference>
<dbReference type="GO" id="GO:0001666">
    <property type="term" value="P:response to hypoxia"/>
    <property type="evidence" value="ECO:0007669"/>
    <property type="project" value="Ensembl"/>
</dbReference>
<dbReference type="GO" id="GO:0035902">
    <property type="term" value="P:response to immobilization stress"/>
    <property type="evidence" value="ECO:0007669"/>
    <property type="project" value="Ensembl"/>
</dbReference>
<dbReference type="GO" id="GO:0010041">
    <property type="term" value="P:response to iron(III) ion"/>
    <property type="evidence" value="ECO:0007669"/>
    <property type="project" value="Ensembl"/>
</dbReference>
<dbReference type="GO" id="GO:0032496">
    <property type="term" value="P:response to lipopolysaccharide"/>
    <property type="evidence" value="ECO:0007669"/>
    <property type="project" value="Ensembl"/>
</dbReference>
<dbReference type="GO" id="GO:0009624">
    <property type="term" value="P:response to nematode"/>
    <property type="evidence" value="ECO:0007669"/>
    <property type="project" value="Ensembl"/>
</dbReference>
<dbReference type="GO" id="GO:0033189">
    <property type="term" value="P:response to vitamin A"/>
    <property type="evidence" value="ECO:0007669"/>
    <property type="project" value="Ensembl"/>
</dbReference>
<dbReference type="GO" id="GO:0042572">
    <property type="term" value="P:retinol metabolic process"/>
    <property type="evidence" value="ECO:0000314"/>
    <property type="project" value="UniProtKB"/>
</dbReference>
<dbReference type="GO" id="GO:0006694">
    <property type="term" value="P:steroid biosynthetic process"/>
    <property type="evidence" value="ECO:0007669"/>
    <property type="project" value="UniProtKB-KW"/>
</dbReference>
<dbReference type="GO" id="GO:0008202">
    <property type="term" value="P:steroid metabolic process"/>
    <property type="evidence" value="ECO:0000314"/>
    <property type="project" value="BHF-UCL"/>
</dbReference>
<dbReference type="GO" id="GO:0048771">
    <property type="term" value="P:tissue remodeling"/>
    <property type="evidence" value="ECO:0007669"/>
    <property type="project" value="Ensembl"/>
</dbReference>
<dbReference type="GO" id="GO:0042359">
    <property type="term" value="P:vitamin D metabolic process"/>
    <property type="evidence" value="ECO:0000314"/>
    <property type="project" value="BHF-UCL"/>
</dbReference>
<dbReference type="GO" id="GO:0006805">
    <property type="term" value="P:xenobiotic metabolic process"/>
    <property type="evidence" value="ECO:0000314"/>
    <property type="project" value="BHF-UCL"/>
</dbReference>
<dbReference type="CDD" id="cd20676">
    <property type="entry name" value="CYP1A"/>
    <property type="match status" value="1"/>
</dbReference>
<dbReference type="FunFam" id="1.10.630.10:FF:000002">
    <property type="entry name" value="Cytochrome P450 1A1"/>
    <property type="match status" value="1"/>
</dbReference>
<dbReference type="Gene3D" id="1.10.630.10">
    <property type="entry name" value="Cytochrome P450"/>
    <property type="match status" value="1"/>
</dbReference>
<dbReference type="InterPro" id="IPR001128">
    <property type="entry name" value="Cyt_P450"/>
</dbReference>
<dbReference type="InterPro" id="IPR017972">
    <property type="entry name" value="Cyt_P450_CS"/>
</dbReference>
<dbReference type="InterPro" id="IPR002401">
    <property type="entry name" value="Cyt_P450_E_grp-I"/>
</dbReference>
<dbReference type="InterPro" id="IPR008066">
    <property type="entry name" value="Cyt_P450_E_grp-I_CYP1"/>
</dbReference>
<dbReference type="InterPro" id="IPR036396">
    <property type="entry name" value="Cyt_P450_sf"/>
</dbReference>
<dbReference type="PANTHER" id="PTHR24289:SF21">
    <property type="entry name" value="CYTOCHROME P450 1A"/>
    <property type="match status" value="1"/>
</dbReference>
<dbReference type="PANTHER" id="PTHR24289">
    <property type="entry name" value="STEROID 17-ALPHA-HYDROXYLASE/17,20 LYASE"/>
    <property type="match status" value="1"/>
</dbReference>
<dbReference type="Pfam" id="PF00067">
    <property type="entry name" value="p450"/>
    <property type="match status" value="1"/>
</dbReference>
<dbReference type="PRINTS" id="PR00463">
    <property type="entry name" value="EP450I"/>
</dbReference>
<dbReference type="PRINTS" id="PR01683">
    <property type="entry name" value="EP450ICYP1A"/>
</dbReference>
<dbReference type="PRINTS" id="PR00385">
    <property type="entry name" value="P450"/>
</dbReference>
<dbReference type="SUPFAM" id="SSF48264">
    <property type="entry name" value="Cytochrome P450"/>
    <property type="match status" value="1"/>
</dbReference>
<dbReference type="PROSITE" id="PS00086">
    <property type="entry name" value="CYTOCHROME_P450"/>
    <property type="match status" value="1"/>
</dbReference>
<keyword id="KW-0002">3D-structure</keyword>
<keyword id="KW-0025">Alternative splicing</keyword>
<keyword id="KW-0963">Cytoplasm</keyword>
<keyword id="KW-0256">Endoplasmic reticulum</keyword>
<keyword id="KW-0276">Fatty acid metabolism</keyword>
<keyword id="KW-0325">Glycoprotein</keyword>
<keyword id="KW-0349">Heme</keyword>
<keyword id="KW-0408">Iron</keyword>
<keyword id="KW-0444">Lipid biosynthesis</keyword>
<keyword id="KW-0443">Lipid metabolism</keyword>
<keyword id="KW-0456">Lyase</keyword>
<keyword id="KW-0472">Membrane</keyword>
<keyword id="KW-0479">Metal-binding</keyword>
<keyword id="KW-0492">Microsome</keyword>
<keyword id="KW-0496">Mitochondrion</keyword>
<keyword id="KW-0999">Mitochondrion inner membrane</keyword>
<keyword id="KW-0503">Monooxygenase</keyword>
<keyword id="KW-0560">Oxidoreductase</keyword>
<keyword id="KW-1267">Proteomics identification</keyword>
<keyword id="KW-1185">Reference proteome</keyword>
<keyword id="KW-0752">Steroid biosynthesis</keyword>
<comment type="function">
    <text evidence="3 6 7 8 9 13 16 17 18 19">A cytochrome P450 monooxygenase involved in the metabolism of various endogenous substrates, including fatty acids, steroid hormones and vitamins (PubMed:10681376, PubMed:11555828, PubMed:12865317, PubMed:14559847, PubMed:15041462, PubMed:15805301, PubMed:18577768, PubMed:19965576, PubMed:20972997). Mechanistically, uses molecular oxygen inserting one oxygen atom into a substrate, and reducing the second into a water molecule, with two electrons provided by NADPH via cytochrome P450 reductase (NADPH--hemoprotein reductase) (PubMed:10681376, PubMed:11555828, PubMed:12865317, PubMed:14559847, PubMed:15041462, PubMed:15805301, PubMed:18577768, PubMed:19965576, PubMed:20972997). Catalyzes the hydroxylation of carbon-hydrogen bonds. Exhibits high catalytic activity for the formation of hydroxyestrogens from estrone (E1) and 17beta-estradiol (E2), namely 2-hydroxy E1 and E2, as well as D-ring hydroxylated E1 and E2 at the C15-alpha and C16-alpha positions (PubMed:11555828, PubMed:12865317, PubMed:14559847, PubMed:15805301). Displays different regioselectivities for polyunsaturated fatty acids (PUFA) hydroxylation (PubMed:15041462, PubMed:18577768). Catalyzes the epoxidation of double bonds of certain PUFA (PubMed:15041462, PubMed:19965576, PubMed:20972997). Converts arachidonic acid toward epoxyeicosatrienoic acid (EET) regioisomers, 8,9-, 11,12-, and 14,15-EET, that function as lipid mediators in the vascular system (PubMed:20972997). Displays an absolute stereoselectivity in the epoxidation of eicosapentaenoic acid (EPA) producing the 17(R),18(S) enantiomer (PubMed:15041462). May play an important role in all-trans retinoic acid biosynthesis in extrahepatic tissues. Catalyzes two successive oxidative transformation of all-trans retinol to all-trans retinal and then to the active form all-trans retinoic acid (PubMed:10681376). May also participate in eicosanoids metabolism by converting hydroperoxide species into oxo metabolites (lipoxygenase-like reaction, NADPH-independent) (PubMed:21068195).</text>
</comment>
<comment type="catalytic activity">
    <reaction evidence="7 9 13 16">
        <text>an organic molecule + reduced [NADPH--hemoprotein reductase] + O2 = an alcohol + oxidized [NADPH--hemoprotein reductase] + H2O + H(+)</text>
        <dbReference type="Rhea" id="RHEA:17149"/>
        <dbReference type="Rhea" id="RHEA-COMP:11964"/>
        <dbReference type="Rhea" id="RHEA-COMP:11965"/>
        <dbReference type="ChEBI" id="CHEBI:15377"/>
        <dbReference type="ChEBI" id="CHEBI:15378"/>
        <dbReference type="ChEBI" id="CHEBI:15379"/>
        <dbReference type="ChEBI" id="CHEBI:30879"/>
        <dbReference type="ChEBI" id="CHEBI:57618"/>
        <dbReference type="ChEBI" id="CHEBI:58210"/>
        <dbReference type="ChEBI" id="CHEBI:142491"/>
        <dbReference type="EC" id="1.14.14.1"/>
    </reaction>
    <physiologicalReaction direction="right-to-left" evidence="29 31 32 33">
        <dbReference type="Rhea" id="RHEA:17151"/>
    </physiologicalReaction>
</comment>
<comment type="catalytic activity">
    <reaction evidence="7 13">
        <text>estrone + reduced [NADPH--hemoprotein reductase] + O2 = 2-hydroxyestrone + oxidized [NADPH--hemoprotein reductase] + H2O + H(+)</text>
        <dbReference type="Rhea" id="RHEA:47208"/>
        <dbReference type="Rhea" id="RHEA-COMP:11964"/>
        <dbReference type="Rhea" id="RHEA-COMP:11965"/>
        <dbReference type="ChEBI" id="CHEBI:1156"/>
        <dbReference type="ChEBI" id="CHEBI:15377"/>
        <dbReference type="ChEBI" id="CHEBI:15378"/>
        <dbReference type="ChEBI" id="CHEBI:15379"/>
        <dbReference type="ChEBI" id="CHEBI:17263"/>
        <dbReference type="ChEBI" id="CHEBI:57618"/>
        <dbReference type="ChEBI" id="CHEBI:58210"/>
    </reaction>
    <physiologicalReaction direction="left-to-right" evidence="29 32">
        <dbReference type="Rhea" id="RHEA:47209"/>
    </physiologicalReaction>
</comment>
<comment type="catalytic activity">
    <reaction evidence="7 13">
        <text>estrone + reduced [NADPH--hemoprotein reductase] + O2 = 4-hydroxyestrone + oxidized [NADPH--hemoprotein reductase] + H2O + H(+)</text>
        <dbReference type="Rhea" id="RHEA:47292"/>
        <dbReference type="Rhea" id="RHEA-COMP:11964"/>
        <dbReference type="Rhea" id="RHEA-COMP:11965"/>
        <dbReference type="ChEBI" id="CHEBI:15377"/>
        <dbReference type="ChEBI" id="CHEBI:15378"/>
        <dbReference type="ChEBI" id="CHEBI:15379"/>
        <dbReference type="ChEBI" id="CHEBI:17263"/>
        <dbReference type="ChEBI" id="CHEBI:57618"/>
        <dbReference type="ChEBI" id="CHEBI:58210"/>
        <dbReference type="ChEBI" id="CHEBI:87602"/>
    </reaction>
    <physiologicalReaction direction="left-to-right" evidence="29 32">
        <dbReference type="Rhea" id="RHEA:47293"/>
    </physiologicalReaction>
</comment>
<comment type="catalytic activity">
    <reaction evidence="7 13">
        <text>estrone + reduced [NADPH--hemoprotein reductase] + O2 = 6alpha-hydroxyestrone + oxidized [NADPH--hemoprotein reductase] + H2O + H(+)</text>
        <dbReference type="Rhea" id="RHEA:47308"/>
        <dbReference type="Rhea" id="RHEA-COMP:11964"/>
        <dbReference type="Rhea" id="RHEA-COMP:11965"/>
        <dbReference type="ChEBI" id="CHEBI:15377"/>
        <dbReference type="ChEBI" id="CHEBI:15378"/>
        <dbReference type="ChEBI" id="CHEBI:15379"/>
        <dbReference type="ChEBI" id="CHEBI:17263"/>
        <dbReference type="ChEBI" id="CHEBI:57618"/>
        <dbReference type="ChEBI" id="CHEBI:58210"/>
        <dbReference type="ChEBI" id="CHEBI:87605"/>
    </reaction>
    <physiologicalReaction direction="left-to-right" evidence="29 32">
        <dbReference type="Rhea" id="RHEA:47309"/>
    </physiologicalReaction>
</comment>
<comment type="catalytic activity">
    <reaction evidence="7 13">
        <text>estrone + reduced [NADPH--hemoprotein reductase] + O2 = 15alpha-hydroxyestrone + oxidized [NADPH--hemoprotein reductase] + H2O + H(+)</text>
        <dbReference type="Rhea" id="RHEA:47312"/>
        <dbReference type="Rhea" id="RHEA-COMP:11964"/>
        <dbReference type="Rhea" id="RHEA-COMP:11965"/>
        <dbReference type="ChEBI" id="CHEBI:15377"/>
        <dbReference type="ChEBI" id="CHEBI:15378"/>
        <dbReference type="ChEBI" id="CHEBI:15379"/>
        <dbReference type="ChEBI" id="CHEBI:17263"/>
        <dbReference type="ChEBI" id="CHEBI:57618"/>
        <dbReference type="ChEBI" id="CHEBI:58210"/>
        <dbReference type="ChEBI" id="CHEBI:87618"/>
    </reaction>
    <physiologicalReaction direction="left-to-right" evidence="29 32">
        <dbReference type="Rhea" id="RHEA:47313"/>
    </physiologicalReaction>
</comment>
<comment type="catalytic activity">
    <reaction evidence="7 8">
        <text>estrone + reduced [NADPH--hemoprotein reductase] + O2 = 16alpha-hydroxyestrone + oxidized [NADPH--hemoprotein reductase] + H2O + H(+)</text>
        <dbReference type="Rhea" id="RHEA:47204"/>
        <dbReference type="Rhea" id="RHEA-COMP:11964"/>
        <dbReference type="Rhea" id="RHEA-COMP:11965"/>
        <dbReference type="ChEBI" id="CHEBI:776"/>
        <dbReference type="ChEBI" id="CHEBI:15377"/>
        <dbReference type="ChEBI" id="CHEBI:15378"/>
        <dbReference type="ChEBI" id="CHEBI:15379"/>
        <dbReference type="ChEBI" id="CHEBI:17263"/>
        <dbReference type="ChEBI" id="CHEBI:57618"/>
        <dbReference type="ChEBI" id="CHEBI:58210"/>
    </reaction>
    <physiologicalReaction direction="left-to-right" evidence="29 30">
        <dbReference type="Rhea" id="RHEA:47205"/>
    </physiologicalReaction>
</comment>
<comment type="catalytic activity">
    <reaction evidence="6 7 13">
        <text>17beta-estradiol + reduced [NADPH--hemoprotein reductase] + O2 = 2-hydroxy-17beta-estradiol + oxidized [NADPH--hemoprotein reductase] + H2O + H(+)</text>
        <dbReference type="Rhea" id="RHEA:47212"/>
        <dbReference type="Rhea" id="RHEA-COMP:11964"/>
        <dbReference type="Rhea" id="RHEA-COMP:11965"/>
        <dbReference type="ChEBI" id="CHEBI:15377"/>
        <dbReference type="ChEBI" id="CHEBI:15378"/>
        <dbReference type="ChEBI" id="CHEBI:15379"/>
        <dbReference type="ChEBI" id="CHEBI:16469"/>
        <dbReference type="ChEBI" id="CHEBI:28744"/>
        <dbReference type="ChEBI" id="CHEBI:57618"/>
        <dbReference type="ChEBI" id="CHEBI:58210"/>
    </reaction>
    <physiologicalReaction direction="left-to-right" evidence="28 29 32">
        <dbReference type="Rhea" id="RHEA:47213"/>
    </physiologicalReaction>
</comment>
<comment type="catalytic activity">
    <reaction evidence="7">
        <text>17beta-estradiol + reduced [NADPH--hemoprotein reductase] + O2 = 4-hydroxy-17beta-estradiol + oxidized [NADPH--hemoprotein reductase] + H2O + H(+)</text>
        <dbReference type="Rhea" id="RHEA:47280"/>
        <dbReference type="Rhea" id="RHEA-COMP:11964"/>
        <dbReference type="Rhea" id="RHEA-COMP:11965"/>
        <dbReference type="ChEBI" id="CHEBI:15377"/>
        <dbReference type="ChEBI" id="CHEBI:15378"/>
        <dbReference type="ChEBI" id="CHEBI:15379"/>
        <dbReference type="ChEBI" id="CHEBI:16469"/>
        <dbReference type="ChEBI" id="CHEBI:57618"/>
        <dbReference type="ChEBI" id="CHEBI:58210"/>
        <dbReference type="ChEBI" id="CHEBI:62845"/>
    </reaction>
    <physiologicalReaction direction="left-to-right" evidence="29">
        <dbReference type="Rhea" id="RHEA:47281"/>
    </physiologicalReaction>
</comment>
<comment type="catalytic activity">
    <reaction evidence="7 13">
        <text>17beta-estradiol + reduced [NADPH--hemoprotein reductase] + O2 = 6alpha-hydroxy-17beta-estradiol + oxidized [NADPH--hemoprotein reductase] + H2O + H(+)</text>
        <dbReference type="Rhea" id="RHEA:47284"/>
        <dbReference type="Rhea" id="RHEA-COMP:11964"/>
        <dbReference type="Rhea" id="RHEA-COMP:11965"/>
        <dbReference type="ChEBI" id="CHEBI:15377"/>
        <dbReference type="ChEBI" id="CHEBI:15378"/>
        <dbReference type="ChEBI" id="CHEBI:15379"/>
        <dbReference type="ChEBI" id="CHEBI:16469"/>
        <dbReference type="ChEBI" id="CHEBI:57618"/>
        <dbReference type="ChEBI" id="CHEBI:58210"/>
        <dbReference type="ChEBI" id="CHEBI:62847"/>
    </reaction>
    <physiologicalReaction direction="left-to-right" evidence="29 32">
        <dbReference type="Rhea" id="RHEA:47285"/>
    </physiologicalReaction>
</comment>
<comment type="catalytic activity">
    <reaction evidence="7">
        <text>17beta-estradiol + reduced [NADPH--hemoprotein reductase] + O2 = 7alpha-hydroxy-17beta-estradiol + oxidized [NADPH--hemoprotein reductase] + H2O + H(+)</text>
        <dbReference type="Rhea" id="RHEA:47288"/>
        <dbReference type="Rhea" id="RHEA-COMP:11964"/>
        <dbReference type="Rhea" id="RHEA-COMP:11965"/>
        <dbReference type="ChEBI" id="CHEBI:15377"/>
        <dbReference type="ChEBI" id="CHEBI:15378"/>
        <dbReference type="ChEBI" id="CHEBI:15379"/>
        <dbReference type="ChEBI" id="CHEBI:16469"/>
        <dbReference type="ChEBI" id="CHEBI:57618"/>
        <dbReference type="ChEBI" id="CHEBI:58210"/>
        <dbReference type="ChEBI" id="CHEBI:87598"/>
    </reaction>
    <physiologicalReaction direction="left-to-right" evidence="29">
        <dbReference type="Rhea" id="RHEA:47289"/>
    </physiologicalReaction>
</comment>
<comment type="catalytic activity">
    <reaction evidence="7 13">
        <text>17beta-estradiol + reduced [NADPH--hemoprotein reductase] + O2 = 15alpha-hydroxy-17beta-estradiol + oxidized [NADPH--hemoprotein reductase] + H2O + H(+)</text>
        <dbReference type="Rhea" id="RHEA:47276"/>
        <dbReference type="Rhea" id="RHEA-COMP:11964"/>
        <dbReference type="Rhea" id="RHEA-COMP:11965"/>
        <dbReference type="ChEBI" id="CHEBI:15377"/>
        <dbReference type="ChEBI" id="CHEBI:15378"/>
        <dbReference type="ChEBI" id="CHEBI:15379"/>
        <dbReference type="ChEBI" id="CHEBI:16469"/>
        <dbReference type="ChEBI" id="CHEBI:57618"/>
        <dbReference type="ChEBI" id="CHEBI:58210"/>
        <dbReference type="ChEBI" id="CHEBI:87593"/>
    </reaction>
    <physiologicalReaction direction="left-to-right" evidence="29 32">
        <dbReference type="Rhea" id="RHEA:47277"/>
    </physiologicalReaction>
</comment>
<comment type="catalytic activity">
    <reaction evidence="16">
        <text>(5Z,8Z,11Z)-eicosatrienoate + reduced [NADPH--hemoprotein reductase] + O2 = 19-hydroxy-(5Z,8Z,11Z)-eicosatrienoate + oxidized [NADPH--hemoprotein reductase] + H2O + H(+)</text>
        <dbReference type="Rhea" id="RHEA:50076"/>
        <dbReference type="Rhea" id="RHEA-COMP:11964"/>
        <dbReference type="Rhea" id="RHEA-COMP:11965"/>
        <dbReference type="ChEBI" id="CHEBI:15377"/>
        <dbReference type="ChEBI" id="CHEBI:15378"/>
        <dbReference type="ChEBI" id="CHEBI:15379"/>
        <dbReference type="ChEBI" id="CHEBI:57618"/>
        <dbReference type="ChEBI" id="CHEBI:58210"/>
        <dbReference type="ChEBI" id="CHEBI:78043"/>
        <dbReference type="ChEBI" id="CHEBI:132024"/>
    </reaction>
    <physiologicalReaction direction="left-to-right" evidence="33">
        <dbReference type="Rhea" id="RHEA:50077"/>
    </physiologicalReaction>
</comment>
<comment type="catalytic activity">
    <reaction evidence="9">
        <text>(5Z,8Z,11Z,14Z)-eicosatetraenoate + reduced [NADPH--hemoprotein reductase] + O2 = 16-hydroxy-(5Z,8Z,11Z,14Z)-eicosatetraenoate + oxidized [NADPH--hemoprotein reductase] + H2O + H(+)</text>
        <dbReference type="Rhea" id="RHEA:49972"/>
        <dbReference type="Rhea" id="RHEA-COMP:11964"/>
        <dbReference type="Rhea" id="RHEA-COMP:11965"/>
        <dbReference type="ChEBI" id="CHEBI:15377"/>
        <dbReference type="ChEBI" id="CHEBI:15378"/>
        <dbReference type="ChEBI" id="CHEBI:15379"/>
        <dbReference type="ChEBI" id="CHEBI:32395"/>
        <dbReference type="ChEBI" id="CHEBI:57618"/>
        <dbReference type="ChEBI" id="CHEBI:58210"/>
        <dbReference type="ChEBI" id="CHEBI:132019"/>
    </reaction>
    <physiologicalReaction direction="left-to-right" evidence="31">
        <dbReference type="Rhea" id="RHEA:49973"/>
    </physiologicalReaction>
</comment>
<comment type="catalytic activity">
    <reaction evidence="9">
        <text>(5Z,8Z,11Z,14Z)-eicosatetraenoate + reduced [NADPH--hemoprotein reductase] + O2 = 17-hydroxy-(5Z,8Z,11Z,14Z)-eicosatetraenoate + oxidized [NADPH--hemoprotein reductase] + H2O + H(+)</text>
        <dbReference type="Rhea" id="RHEA:49968"/>
        <dbReference type="Rhea" id="RHEA-COMP:11964"/>
        <dbReference type="Rhea" id="RHEA-COMP:11965"/>
        <dbReference type="ChEBI" id="CHEBI:15377"/>
        <dbReference type="ChEBI" id="CHEBI:15378"/>
        <dbReference type="ChEBI" id="CHEBI:15379"/>
        <dbReference type="ChEBI" id="CHEBI:32395"/>
        <dbReference type="ChEBI" id="CHEBI:57618"/>
        <dbReference type="ChEBI" id="CHEBI:58210"/>
        <dbReference type="ChEBI" id="CHEBI:132016"/>
    </reaction>
    <physiologicalReaction direction="left-to-right" evidence="31">
        <dbReference type="Rhea" id="RHEA:49969"/>
    </physiologicalReaction>
</comment>
<comment type="catalytic activity">
    <reaction evidence="9">
        <text>(5Z,8Z,11Z,14Z)-eicosatetraenoate + reduced [NADPH--hemoprotein reductase] + O2 = 18-hydroxy-(5Z,8Z,11Z,14Z)-eicosatetraenoate + oxidized [NADPH--hemoprotein reductase] + H2O + H(+)</text>
        <dbReference type="Rhea" id="RHEA:39811"/>
        <dbReference type="Rhea" id="RHEA-COMP:11964"/>
        <dbReference type="Rhea" id="RHEA-COMP:11965"/>
        <dbReference type="ChEBI" id="CHEBI:15377"/>
        <dbReference type="ChEBI" id="CHEBI:15378"/>
        <dbReference type="ChEBI" id="CHEBI:15379"/>
        <dbReference type="ChEBI" id="CHEBI:32395"/>
        <dbReference type="ChEBI" id="CHEBI:57618"/>
        <dbReference type="ChEBI" id="CHEBI:58210"/>
        <dbReference type="ChEBI" id="CHEBI:63590"/>
    </reaction>
    <physiologicalReaction direction="left-to-right" evidence="31">
        <dbReference type="Rhea" id="RHEA:39812"/>
    </physiologicalReaction>
</comment>
<comment type="catalytic activity">
    <reaction evidence="9 16">
        <text>(5Z,8Z,11Z,14Z)-eicosatetraenoate + reduced [NADPH--hemoprotein reductase] + O2 = 19-hydroxy-(5Z,8Z,11Z,14Z)-eicosatetraenoate + oxidized [NADPH--hemoprotein reductase] + H2O + H(+)</text>
        <dbReference type="Rhea" id="RHEA:39759"/>
        <dbReference type="Rhea" id="RHEA-COMP:11964"/>
        <dbReference type="Rhea" id="RHEA-COMP:11965"/>
        <dbReference type="ChEBI" id="CHEBI:15377"/>
        <dbReference type="ChEBI" id="CHEBI:15378"/>
        <dbReference type="ChEBI" id="CHEBI:15379"/>
        <dbReference type="ChEBI" id="CHEBI:32395"/>
        <dbReference type="ChEBI" id="CHEBI:57618"/>
        <dbReference type="ChEBI" id="CHEBI:58210"/>
        <dbReference type="ChEBI" id="CHEBI:76627"/>
    </reaction>
    <physiologicalReaction direction="left-to-right" evidence="31 33">
        <dbReference type="Rhea" id="RHEA:39760"/>
    </physiologicalReaction>
</comment>
<comment type="catalytic activity">
    <reaction evidence="9">
        <text>(5Z,8Z,11Z,14Z,17Z)-eicosapentaenoate + reduced [NADPH--hemoprotein reductase] + O2 = 19-hydroxy-(5Z,8Z,11Z,14Z,17Z)-eicosapentaenoate + oxidized [NADPH--hemoprotein reductase] + H2O + H(+)</text>
        <dbReference type="Rhea" id="RHEA:39787"/>
        <dbReference type="Rhea" id="RHEA-COMP:11964"/>
        <dbReference type="Rhea" id="RHEA-COMP:11965"/>
        <dbReference type="ChEBI" id="CHEBI:15377"/>
        <dbReference type="ChEBI" id="CHEBI:15378"/>
        <dbReference type="ChEBI" id="CHEBI:15379"/>
        <dbReference type="ChEBI" id="CHEBI:57618"/>
        <dbReference type="ChEBI" id="CHEBI:58210"/>
        <dbReference type="ChEBI" id="CHEBI:58562"/>
        <dbReference type="ChEBI" id="CHEBI:76636"/>
    </reaction>
    <physiologicalReaction direction="left-to-right" evidence="31">
        <dbReference type="Rhea" id="RHEA:39788"/>
    </physiologicalReaction>
</comment>
<comment type="catalytic activity">
    <reaction evidence="18">
        <text>(5Z,8Z,11Z,14Z)-eicosatetraenoate + reduced [NADPH--hemoprotein reductase] + O2 = (8R,9S)-epoxy-(5Z,11Z,14Z)-eicosatrienoate + oxidized [NADPH--hemoprotein reductase] + H2O + H(+)</text>
        <dbReference type="Rhea" id="RHEA:49884"/>
        <dbReference type="Rhea" id="RHEA-COMP:11964"/>
        <dbReference type="Rhea" id="RHEA-COMP:11965"/>
        <dbReference type="ChEBI" id="CHEBI:15377"/>
        <dbReference type="ChEBI" id="CHEBI:15378"/>
        <dbReference type="ChEBI" id="CHEBI:15379"/>
        <dbReference type="ChEBI" id="CHEBI:32395"/>
        <dbReference type="ChEBI" id="CHEBI:57618"/>
        <dbReference type="ChEBI" id="CHEBI:58210"/>
        <dbReference type="ChEBI" id="CHEBI:131975"/>
    </reaction>
    <physiologicalReaction direction="left-to-right" evidence="35">
        <dbReference type="Rhea" id="RHEA:49885"/>
    </physiologicalReaction>
</comment>
<comment type="catalytic activity">
    <reaction evidence="18">
        <text>(5Z,8Z,11Z,14Z)-eicosatetraenoate + reduced [NADPH--hemoprotein reductase] + O2 = (11R,12S)-epoxy-(5Z,8Z,14Z)-eicosatrienoate + oxidized [NADPH--hemoprotein reductase] + H2O + H(+)</text>
        <dbReference type="Rhea" id="RHEA:49880"/>
        <dbReference type="Rhea" id="RHEA-COMP:11964"/>
        <dbReference type="Rhea" id="RHEA-COMP:11965"/>
        <dbReference type="ChEBI" id="CHEBI:15377"/>
        <dbReference type="ChEBI" id="CHEBI:15378"/>
        <dbReference type="ChEBI" id="CHEBI:15379"/>
        <dbReference type="ChEBI" id="CHEBI:32395"/>
        <dbReference type="ChEBI" id="CHEBI:57618"/>
        <dbReference type="ChEBI" id="CHEBI:58210"/>
        <dbReference type="ChEBI" id="CHEBI:131970"/>
    </reaction>
    <physiologicalReaction direction="left-to-right" evidence="35">
        <dbReference type="Rhea" id="RHEA:49881"/>
    </physiologicalReaction>
</comment>
<comment type="catalytic activity">
    <reaction evidence="17">
        <text>(5Z,8Z,11Z,14Z)-eicosatetraenoate + reduced [NADPH--hemoprotein reductase] + O2 = (14S,15R)-epoxy-(5Z,8Z,11Z)-eicosatrienoate + oxidized [NADPH--hemoprotein reductase] + H2O + H(+)</text>
        <dbReference type="Rhea" id="RHEA:49856"/>
        <dbReference type="Rhea" id="RHEA-COMP:11964"/>
        <dbReference type="Rhea" id="RHEA-COMP:11965"/>
        <dbReference type="ChEBI" id="CHEBI:15377"/>
        <dbReference type="ChEBI" id="CHEBI:15378"/>
        <dbReference type="ChEBI" id="CHEBI:15379"/>
        <dbReference type="ChEBI" id="CHEBI:32395"/>
        <dbReference type="ChEBI" id="CHEBI:57618"/>
        <dbReference type="ChEBI" id="CHEBI:58210"/>
        <dbReference type="ChEBI" id="CHEBI:131964"/>
    </reaction>
    <physiologicalReaction direction="left-to-right" evidence="34">
        <dbReference type="Rhea" id="RHEA:49857"/>
    </physiologicalReaction>
</comment>
<comment type="catalytic activity">
    <reaction evidence="17 18">
        <text>(5Z,8Z,11Z,14Z)-eicosatetraenoate + reduced [NADPH--hemoprotein reductase] + O2 = (14R,15S)-epoxy-(5Z,8Z,11Z)-eicosatrienoate + oxidized [NADPH--hemoprotein reductase] + H2O + H(+)</text>
        <dbReference type="Rhea" id="RHEA:49860"/>
        <dbReference type="Rhea" id="RHEA-COMP:11964"/>
        <dbReference type="Rhea" id="RHEA-COMP:11965"/>
        <dbReference type="ChEBI" id="CHEBI:15377"/>
        <dbReference type="ChEBI" id="CHEBI:15378"/>
        <dbReference type="ChEBI" id="CHEBI:15379"/>
        <dbReference type="ChEBI" id="CHEBI:32395"/>
        <dbReference type="ChEBI" id="CHEBI:57618"/>
        <dbReference type="ChEBI" id="CHEBI:58210"/>
        <dbReference type="ChEBI" id="CHEBI:131965"/>
    </reaction>
    <physiologicalReaction direction="left-to-right" evidence="34 35">
        <dbReference type="Rhea" id="RHEA:49861"/>
    </physiologicalReaction>
</comment>
<comment type="catalytic activity">
    <reaction evidence="9 17">
        <text>(5Z,8Z,11Z,14Z,17Z)-eicosapentaenoate + reduced [NADPH--hemoprotein reductase] + O2 = (17R,18S)-epoxy-(5Z,8Z,11Z,14Z)-eicosatetraenoate + oxidized [NADPH--hemoprotein reductase] + H2O + H(+)</text>
        <dbReference type="Rhea" id="RHEA:39779"/>
        <dbReference type="Rhea" id="RHEA-COMP:11964"/>
        <dbReference type="Rhea" id="RHEA-COMP:11965"/>
        <dbReference type="ChEBI" id="CHEBI:15377"/>
        <dbReference type="ChEBI" id="CHEBI:15378"/>
        <dbReference type="ChEBI" id="CHEBI:15379"/>
        <dbReference type="ChEBI" id="CHEBI:57618"/>
        <dbReference type="ChEBI" id="CHEBI:58210"/>
        <dbReference type="ChEBI" id="CHEBI:58562"/>
        <dbReference type="ChEBI" id="CHEBI:76634"/>
    </reaction>
    <physiologicalReaction direction="left-to-right" evidence="31 34">
        <dbReference type="Rhea" id="RHEA:39780"/>
    </physiologicalReaction>
</comment>
<comment type="catalytic activity">
    <reaction evidence="17">
        <text>(4Z,7Z,10Z,13Z,16Z,19Z)-docosahexaenoate + reduced [NADPH--hemoprotein reductase] + O2 = (19S,20R)-epoxy-(4Z,7Z,10Z,13Z,16Z)-docosapentaenoate + oxidized [NADPH--hemoprotein reductase] + H2O + H(+)</text>
        <dbReference type="Rhea" id="RHEA:52124"/>
        <dbReference type="Rhea" id="RHEA-COMP:11964"/>
        <dbReference type="Rhea" id="RHEA-COMP:11965"/>
        <dbReference type="ChEBI" id="CHEBI:15377"/>
        <dbReference type="ChEBI" id="CHEBI:15378"/>
        <dbReference type="ChEBI" id="CHEBI:15379"/>
        <dbReference type="ChEBI" id="CHEBI:57618"/>
        <dbReference type="ChEBI" id="CHEBI:58210"/>
        <dbReference type="ChEBI" id="CHEBI:77016"/>
        <dbReference type="ChEBI" id="CHEBI:136411"/>
    </reaction>
    <physiologicalReaction direction="left-to-right" evidence="34">
        <dbReference type="Rhea" id="RHEA:52125"/>
    </physiologicalReaction>
</comment>
<comment type="catalytic activity">
    <reaction evidence="17">
        <text>(4Z,7Z,10Z,13Z,16Z,19Z)-docosahexaenoate + reduced [NADPH--hemoprotein reductase] + O2 = (19R,20S)-epoxy-(4Z,7Z,10Z,13Z,16Z)-docosapentaenoate + oxidized [NADPH--hemoprotein reductase] + H2O + H(+)</text>
        <dbReference type="Rhea" id="RHEA:52120"/>
        <dbReference type="Rhea" id="RHEA-COMP:11964"/>
        <dbReference type="Rhea" id="RHEA-COMP:11965"/>
        <dbReference type="ChEBI" id="CHEBI:15377"/>
        <dbReference type="ChEBI" id="CHEBI:15378"/>
        <dbReference type="ChEBI" id="CHEBI:15379"/>
        <dbReference type="ChEBI" id="CHEBI:57618"/>
        <dbReference type="ChEBI" id="CHEBI:58210"/>
        <dbReference type="ChEBI" id="CHEBI:77016"/>
        <dbReference type="ChEBI" id="CHEBI:136410"/>
    </reaction>
    <physiologicalReaction direction="left-to-right" evidence="34">
        <dbReference type="Rhea" id="RHEA:52121"/>
    </physiologicalReaction>
</comment>
<comment type="catalytic activity">
    <reaction evidence="3">
        <text>all-trans-retinol + reduced [NADPH--hemoprotein reductase] + O2 = all-trans-retinal + oxidized [NADPH--hemoprotein reductase] + 2 H2O + H(+)</text>
        <dbReference type="Rhea" id="RHEA:42092"/>
        <dbReference type="Rhea" id="RHEA-COMP:11964"/>
        <dbReference type="Rhea" id="RHEA-COMP:11965"/>
        <dbReference type="ChEBI" id="CHEBI:15377"/>
        <dbReference type="ChEBI" id="CHEBI:15378"/>
        <dbReference type="ChEBI" id="CHEBI:15379"/>
        <dbReference type="ChEBI" id="CHEBI:17336"/>
        <dbReference type="ChEBI" id="CHEBI:17898"/>
        <dbReference type="ChEBI" id="CHEBI:57618"/>
        <dbReference type="ChEBI" id="CHEBI:58210"/>
    </reaction>
    <physiologicalReaction direction="left-to-right" evidence="27">
        <dbReference type="Rhea" id="RHEA:42093"/>
    </physiologicalReaction>
</comment>
<comment type="catalytic activity">
    <reaction evidence="3">
        <text>all-trans-retinal + reduced [NADPH--hemoprotein reductase] + O2 = all-trans-retinoate + oxidized [NADPH--hemoprotein reductase] + H2O + 2 H(+)</text>
        <dbReference type="Rhea" id="RHEA:42088"/>
        <dbReference type="Rhea" id="RHEA-COMP:11964"/>
        <dbReference type="Rhea" id="RHEA-COMP:11965"/>
        <dbReference type="ChEBI" id="CHEBI:15377"/>
        <dbReference type="ChEBI" id="CHEBI:15378"/>
        <dbReference type="ChEBI" id="CHEBI:15379"/>
        <dbReference type="ChEBI" id="CHEBI:17898"/>
        <dbReference type="ChEBI" id="CHEBI:35291"/>
        <dbReference type="ChEBI" id="CHEBI:57618"/>
        <dbReference type="ChEBI" id="CHEBI:58210"/>
    </reaction>
    <physiologicalReaction direction="left-to-right" evidence="27">
        <dbReference type="Rhea" id="RHEA:42089"/>
    </physiologicalReaction>
</comment>
<comment type="catalytic activity">
    <reaction evidence="19">
        <text>(13S)-hydroperoxy-(9Z,11E)-octadecadienoate = 13-oxo-(9Z,11E)-octadecadienoate + H2O</text>
        <dbReference type="Rhea" id="RHEA:48716"/>
        <dbReference type="ChEBI" id="CHEBI:15377"/>
        <dbReference type="ChEBI" id="CHEBI:57466"/>
        <dbReference type="ChEBI" id="CHEBI:90781"/>
    </reaction>
    <physiologicalReaction direction="left-to-right" evidence="36">
        <dbReference type="Rhea" id="RHEA:48717"/>
    </physiologicalReaction>
</comment>
<comment type="catalytic activity">
    <reaction evidence="19">
        <text>(12S)-hydroperoxy-(5Z,8Z,10E,14Z)-eicosatetraenoate = 12-oxo-(5Z,8Z,10E,14Z)-eicosatetraenoate + H2O</text>
        <dbReference type="Rhea" id="RHEA:37947"/>
        <dbReference type="ChEBI" id="CHEBI:15377"/>
        <dbReference type="ChEBI" id="CHEBI:57444"/>
        <dbReference type="ChEBI" id="CHEBI:75231"/>
        <dbReference type="EC" id="4.2.1.152"/>
    </reaction>
    <physiologicalReaction direction="left-to-right" evidence="36">
        <dbReference type="Rhea" id="RHEA:37948"/>
    </physiologicalReaction>
</comment>
<comment type="catalytic activity">
    <reaction evidence="19">
        <text>(15S)-hydroperoxy-(5Z,8Z,11Z,13E)-eicosatetraenoate = 15-oxo-(5Z,8Z,11Z,13E)-eicosatetraenoate + H2O</text>
        <dbReference type="Rhea" id="RHEA:48636"/>
        <dbReference type="ChEBI" id="CHEBI:15377"/>
        <dbReference type="ChEBI" id="CHEBI:57410"/>
        <dbReference type="ChEBI" id="CHEBI:57446"/>
    </reaction>
    <physiologicalReaction direction="left-to-right" evidence="36">
        <dbReference type="Rhea" id="RHEA:48637"/>
    </physiologicalReaction>
</comment>
<comment type="catalytic activity">
    <reaction evidence="19">
        <text>(5S)-hydroperoxy-(6E,8Z,11Z,14Z)-eicosatetraenoate = 5-oxo-(6E,8Z,11Z,14Z)-eicosatetraenoate + H2O</text>
        <dbReference type="Rhea" id="RHEA:48632"/>
        <dbReference type="ChEBI" id="CHEBI:15377"/>
        <dbReference type="ChEBI" id="CHEBI:57450"/>
        <dbReference type="ChEBI" id="CHEBI:65342"/>
    </reaction>
    <physiologicalReaction direction="left-to-right" evidence="36">
        <dbReference type="Rhea" id="RHEA:48633"/>
    </physiologicalReaction>
</comment>
<comment type="cofactor">
    <cofactor evidence="20">
        <name>heme</name>
        <dbReference type="ChEBI" id="CHEBI:30413"/>
    </cofactor>
</comment>
<comment type="biophysicochemical properties">
    <kinetics>
        <KM evidence="3">8 uM for all-trans retinol</KM>
        <KM evidence="13">9.5 uM for 17beta-estradiol (2-hydroxylation)</KM>
        <KM evidence="13">11.8 uM for 17beta-estradiol (4-hydroxylation)</KM>
        <KM evidence="13">79 uM for 17beta-estradiol (6alpha-hydroxylation)</KM>
        <KM evidence="13">19.6 uM for 17beta-estradiol (15alpha-hydroxylation)</KM>
        <KM evidence="13">12.2 uM for estrone (2-hydroxylation)</KM>
        <KM evidence="13">22.6 uM for estrone (4-hydroxylation)</KM>
        <KM evidence="13">86 uM for estrone (6alpha-hydroxylation)</KM>
        <KM evidence="13">85 uM for estrone (15alpha-hydroxylation)</KM>
        <Vmax evidence="3">507.0 pmol/min/nmol enzyme toward all-trans retinol</Vmax>
        <Vmax evidence="13">0.6 pmol/min/pmol enzyme toward 17beta-estradiol (2-hydroxylation)</Vmax>
        <Vmax evidence="13">0.02 pmol/min/pmol enzyme toward 17beta-estradiol (4-hydroxylation)</Vmax>
        <Vmax evidence="13">3.6 pmol/min/pmol enzyme toward 17beta-estradiol (6alpha-hydroxylation)</Vmax>
        <Vmax evidence="13">0.9 pmol/min/pmol enzyme toward 17beta-estradiol (15alpha-hydroxylation)</Vmax>
        <Vmax evidence="13">0.4 pmol/min/pmol enzyme toward estrone (2-hydroxylation)</Vmax>
        <Vmax evidence="13">0.1 pmol/min/pmol enzyme toward estrone (4-hydroxylation)</Vmax>
        <Vmax evidence="13">0.2 pmol/min/pmol enzyme toward estrone (6alpha-hydroxylation)</Vmax>
        <Vmax evidence="13">1.2 pmol/min/pmol enzyme toward estrone (15alpha-hydroxylation)</Vmax>
    </kinetics>
</comment>
<comment type="pathway">
    <text evidence="6 7 8 13">Steroid hormone biosynthesis.</text>
</comment>
<comment type="pathway">
    <text evidence="9 16 17 18 19">Lipid metabolism; fatty acid metabolism.</text>
</comment>
<comment type="pathway">
    <text evidence="3">Cofactor metabolism; retinol metabolism.</text>
</comment>
<comment type="subunit">
    <text evidence="2">Interacts with cytosolic chaperones HSP70 and HSP90; this interaction is required for initial targeting to mitochondria. Interacts (via mitochondrial targeting signal) with TOMM40 (via N-terminus); this interaction is required for translocation across the mitochondrial outer membrane.</text>
</comment>
<comment type="interaction">
    <interactant intactId="EBI-10194262">
        <id>P04798</id>
    </interactant>
    <interactant intactId="EBI-2548702">
        <id>Q96DZ9</id>
        <label>CMTM5</label>
    </interactant>
    <organismsDiffer>false</organismsDiffer>
    <experiments>3</experiments>
</comment>
<comment type="interaction">
    <interactant intactId="EBI-10194262">
        <id>P04798</id>
    </interactant>
    <interactant intactId="EBI-11522780">
        <id>Q96DZ9-2</id>
        <label>CMTM5</label>
    </interactant>
    <organismsDiffer>false</organismsDiffer>
    <experiments>3</experiments>
</comment>
<comment type="subcellular location">
    <subcellularLocation>
        <location evidence="2">Endoplasmic reticulum membrane</location>
        <topology evidence="2">Peripheral membrane protein</topology>
    </subcellularLocation>
    <subcellularLocation>
        <location evidence="2">Mitochondrion inner membrane</location>
        <topology evidence="2">Peripheral membrane protein</topology>
    </subcellularLocation>
    <subcellularLocation>
        <location evidence="2">Microsome membrane</location>
        <topology evidence="2">Peripheral membrane protein</topology>
    </subcellularLocation>
    <subcellularLocation>
        <location evidence="2">Cytoplasm</location>
    </subcellularLocation>
</comment>
<comment type="alternative products">
    <event type="alternative splicing"/>
    <isoform>
        <id>P04798-1</id>
        <name>1</name>
        <sequence type="displayed"/>
    </isoform>
    <isoform>
        <id>P04798-2</id>
        <name>2</name>
        <sequence type="described" ref="VSP_053364 VSP_053365"/>
    </isoform>
    <isoform>
        <id>P04798-3</id>
        <name>3</name>
        <sequence type="described" ref="VSP_053363 VSP_053366"/>
    </isoform>
</comment>
<comment type="tissue specificity">
    <text>Lung, lymphocytes and placenta.</text>
</comment>
<comment type="induction">
    <text>By 2,3,7,8-tetrachlorodibenzo-p-dioxin (TCDD).</text>
</comment>
<comment type="similarity">
    <text evidence="26">Belongs to the cytochrome P450 family.</text>
</comment>
<comment type="online information" name="PharmVar Pharmacogen Variation Consortium">
    <link uri="https://www.pharmvar.org/gene/CYP1A1"/>
    <text>CYP1A1 alleles</text>
</comment>
<comment type="online information" name="Wikipedia">
    <link uri="https://en.wikipedia.org/wiki/CYP1A1"/>
    <text>CYP1A1 entry</text>
</comment>
<proteinExistence type="evidence at protein level"/>